<organism>
    <name type="scientific">Escherichia coli (strain K12)</name>
    <dbReference type="NCBI Taxonomy" id="83333"/>
    <lineage>
        <taxon>Bacteria</taxon>
        <taxon>Pseudomonadati</taxon>
        <taxon>Pseudomonadota</taxon>
        <taxon>Gammaproteobacteria</taxon>
        <taxon>Enterobacterales</taxon>
        <taxon>Enterobacteriaceae</taxon>
        <taxon>Escherichia</taxon>
    </lineage>
</organism>
<dbReference type="EMBL" id="X02613">
    <property type="protein sequence ID" value="CAA26463.1"/>
    <property type="molecule type" value="Genomic_DNA"/>
</dbReference>
<dbReference type="EMBL" id="U18997">
    <property type="protein sequence ID" value="AAA58114.1"/>
    <property type="molecule type" value="Genomic_DNA"/>
</dbReference>
<dbReference type="EMBL" id="U00096">
    <property type="protein sequence ID" value="AAC76342.1"/>
    <property type="molecule type" value="Genomic_DNA"/>
</dbReference>
<dbReference type="EMBL" id="AP009048">
    <property type="protein sequence ID" value="BAE77974.1"/>
    <property type="molecule type" value="Genomic_DNA"/>
</dbReference>
<dbReference type="PIR" id="E23129">
    <property type="entry name" value="R5EC2"/>
</dbReference>
<dbReference type="RefSeq" id="NP_417776.1">
    <property type="nucleotide sequence ID" value="NC_000913.3"/>
</dbReference>
<dbReference type="RefSeq" id="WP_000301864.1">
    <property type="nucleotide sequence ID" value="NZ_STEB01000038.1"/>
</dbReference>
<dbReference type="PDB" id="2J28">
    <property type="method" value="EM"/>
    <property type="resolution" value="8.00 A"/>
    <property type="chains" value="C=4-270"/>
</dbReference>
<dbReference type="PDB" id="2RDO">
    <property type="method" value="EM"/>
    <property type="resolution" value="9.10 A"/>
    <property type="chains" value="C=2-273"/>
</dbReference>
<dbReference type="PDB" id="3BBX">
    <property type="method" value="EM"/>
    <property type="resolution" value="10.00 A"/>
    <property type="chains" value="C=1-273"/>
</dbReference>
<dbReference type="PDB" id="3J5L">
    <property type="method" value="EM"/>
    <property type="resolution" value="6.60 A"/>
    <property type="chains" value="C=2-272"/>
</dbReference>
<dbReference type="PDB" id="3J7Z">
    <property type="method" value="EM"/>
    <property type="resolution" value="3.90 A"/>
    <property type="chains" value="C=1-273"/>
</dbReference>
<dbReference type="PDB" id="3J8G">
    <property type="method" value="EM"/>
    <property type="resolution" value="5.00 A"/>
    <property type="chains" value="C=1-273"/>
</dbReference>
<dbReference type="PDB" id="3J9Y">
    <property type="method" value="EM"/>
    <property type="resolution" value="3.90 A"/>
    <property type="chains" value="C=1-273"/>
</dbReference>
<dbReference type="PDB" id="3J9Z">
    <property type="method" value="EM"/>
    <property type="resolution" value="3.60 A"/>
    <property type="chains" value="LN=2-273"/>
</dbReference>
<dbReference type="PDB" id="3JA1">
    <property type="method" value="EM"/>
    <property type="resolution" value="3.60 A"/>
    <property type="chains" value="LD=2-273"/>
</dbReference>
<dbReference type="PDB" id="3JBU">
    <property type="method" value="EM"/>
    <property type="resolution" value="3.64 A"/>
    <property type="chains" value="c=1-273"/>
</dbReference>
<dbReference type="PDB" id="3JBV">
    <property type="method" value="EM"/>
    <property type="resolution" value="3.32 A"/>
    <property type="chains" value="c=1-273"/>
</dbReference>
<dbReference type="PDB" id="3JCD">
    <property type="method" value="EM"/>
    <property type="resolution" value="3.70 A"/>
    <property type="chains" value="C=1-273"/>
</dbReference>
<dbReference type="PDB" id="3JCE">
    <property type="method" value="EM"/>
    <property type="resolution" value="3.20 A"/>
    <property type="chains" value="C=1-273"/>
</dbReference>
<dbReference type="PDB" id="3JCJ">
    <property type="method" value="EM"/>
    <property type="resolution" value="3.70 A"/>
    <property type="chains" value="B=1-273"/>
</dbReference>
<dbReference type="PDB" id="3JCN">
    <property type="method" value="EM"/>
    <property type="resolution" value="4.60 A"/>
    <property type="chains" value="C=1-273"/>
</dbReference>
<dbReference type="PDB" id="487D">
    <property type="method" value="EM"/>
    <property type="resolution" value="7.50 A"/>
    <property type="chains" value="I=62-172"/>
</dbReference>
<dbReference type="PDB" id="4CSU">
    <property type="method" value="EM"/>
    <property type="resolution" value="5.50 A"/>
    <property type="chains" value="C=2-273"/>
</dbReference>
<dbReference type="PDB" id="4U1U">
    <property type="method" value="X-ray"/>
    <property type="resolution" value="2.95 A"/>
    <property type="chains" value="BC/DC=2-272"/>
</dbReference>
<dbReference type="PDB" id="4U1V">
    <property type="method" value="X-ray"/>
    <property type="resolution" value="3.00 A"/>
    <property type="chains" value="BC/DC=2-272"/>
</dbReference>
<dbReference type="PDB" id="4U20">
    <property type="method" value="X-ray"/>
    <property type="resolution" value="2.90 A"/>
    <property type="chains" value="BC/DC=2-272"/>
</dbReference>
<dbReference type="PDB" id="4U24">
    <property type="method" value="X-ray"/>
    <property type="resolution" value="2.90 A"/>
    <property type="chains" value="BC/DC=2-272"/>
</dbReference>
<dbReference type="PDB" id="4U25">
    <property type="method" value="X-ray"/>
    <property type="resolution" value="2.90 A"/>
    <property type="chains" value="BC/DC=2-272"/>
</dbReference>
<dbReference type="PDB" id="4U26">
    <property type="method" value="X-ray"/>
    <property type="resolution" value="2.80 A"/>
    <property type="chains" value="BC/DC=2-272"/>
</dbReference>
<dbReference type="PDB" id="4U27">
    <property type="method" value="X-ray"/>
    <property type="resolution" value="2.80 A"/>
    <property type="chains" value="BC/DC=2-272"/>
</dbReference>
<dbReference type="PDB" id="4UY8">
    <property type="method" value="EM"/>
    <property type="resolution" value="3.80 A"/>
    <property type="chains" value="C=2-272"/>
</dbReference>
<dbReference type="PDB" id="4V47">
    <property type="method" value="EM"/>
    <property type="resolution" value="12.30 A"/>
    <property type="chains" value="AA=2-273"/>
</dbReference>
<dbReference type="PDB" id="4V48">
    <property type="method" value="EM"/>
    <property type="resolution" value="11.50 A"/>
    <property type="chains" value="AA=2-273"/>
</dbReference>
<dbReference type="PDB" id="4V4H">
    <property type="method" value="X-ray"/>
    <property type="resolution" value="3.46 A"/>
    <property type="chains" value="BC/DC=1-273"/>
</dbReference>
<dbReference type="PDB" id="4V4Q">
    <property type="method" value="X-ray"/>
    <property type="resolution" value="3.46 A"/>
    <property type="chains" value="BC/DC=1-273"/>
</dbReference>
<dbReference type="PDB" id="4V4V">
    <property type="method" value="EM"/>
    <property type="resolution" value="15.00 A"/>
    <property type="chains" value="BA=39-265"/>
</dbReference>
<dbReference type="PDB" id="4V4W">
    <property type="method" value="EM"/>
    <property type="resolution" value="15.00 A"/>
    <property type="chains" value="BA=39-265"/>
</dbReference>
<dbReference type="PDB" id="4V50">
    <property type="method" value="X-ray"/>
    <property type="resolution" value="3.22 A"/>
    <property type="chains" value="BC/DC=2-273"/>
</dbReference>
<dbReference type="PDB" id="4V52">
    <property type="method" value="X-ray"/>
    <property type="resolution" value="3.21 A"/>
    <property type="chains" value="BC/DC=2-273"/>
</dbReference>
<dbReference type="PDB" id="4V53">
    <property type="method" value="X-ray"/>
    <property type="resolution" value="3.54 A"/>
    <property type="chains" value="BC/DC=2-273"/>
</dbReference>
<dbReference type="PDB" id="4V54">
    <property type="method" value="X-ray"/>
    <property type="resolution" value="3.30 A"/>
    <property type="chains" value="BC/DC=2-273"/>
</dbReference>
<dbReference type="PDB" id="4V55">
    <property type="method" value="X-ray"/>
    <property type="resolution" value="4.00 A"/>
    <property type="chains" value="BC/DC=2-273"/>
</dbReference>
<dbReference type="PDB" id="4V56">
    <property type="method" value="X-ray"/>
    <property type="resolution" value="3.93 A"/>
    <property type="chains" value="BC/DC=2-273"/>
</dbReference>
<dbReference type="PDB" id="4V57">
    <property type="method" value="X-ray"/>
    <property type="resolution" value="3.50 A"/>
    <property type="chains" value="BC/DC=2-273"/>
</dbReference>
<dbReference type="PDB" id="4V5B">
    <property type="method" value="X-ray"/>
    <property type="resolution" value="3.74 A"/>
    <property type="chains" value="AC/CC=1-273"/>
</dbReference>
<dbReference type="PDB" id="4V5H">
    <property type="method" value="EM"/>
    <property type="resolution" value="5.80 A"/>
    <property type="chains" value="BC=2-272"/>
</dbReference>
<dbReference type="PDB" id="4V5Y">
    <property type="method" value="X-ray"/>
    <property type="resolution" value="4.45 A"/>
    <property type="chains" value="BC/DC=2-273"/>
</dbReference>
<dbReference type="PDB" id="4V64">
    <property type="method" value="X-ray"/>
    <property type="resolution" value="3.50 A"/>
    <property type="chains" value="BC/DC=1-273"/>
</dbReference>
<dbReference type="PDB" id="4V65">
    <property type="method" value="EM"/>
    <property type="resolution" value="9.00 A"/>
    <property type="chains" value="BN=1-270"/>
</dbReference>
<dbReference type="PDB" id="4V66">
    <property type="method" value="EM"/>
    <property type="resolution" value="9.00 A"/>
    <property type="chains" value="BN=1-270"/>
</dbReference>
<dbReference type="PDB" id="4V69">
    <property type="method" value="EM"/>
    <property type="resolution" value="6.70 A"/>
    <property type="chains" value="BC=2-272"/>
</dbReference>
<dbReference type="PDB" id="4V6C">
    <property type="method" value="X-ray"/>
    <property type="resolution" value="3.19 A"/>
    <property type="chains" value="BC/DC=1-273"/>
</dbReference>
<dbReference type="PDB" id="4V6D">
    <property type="method" value="X-ray"/>
    <property type="resolution" value="3.81 A"/>
    <property type="chains" value="BC/DC=1-273"/>
</dbReference>
<dbReference type="PDB" id="4V6E">
    <property type="method" value="X-ray"/>
    <property type="resolution" value="3.71 A"/>
    <property type="chains" value="BC/DC=1-273"/>
</dbReference>
<dbReference type="PDB" id="4V6K">
    <property type="method" value="EM"/>
    <property type="resolution" value="8.25 A"/>
    <property type="chains" value="AD=1-273"/>
</dbReference>
<dbReference type="PDB" id="4V6L">
    <property type="method" value="EM"/>
    <property type="resolution" value="13.20 A"/>
    <property type="chains" value="BD=1-273"/>
</dbReference>
<dbReference type="PDB" id="4V6M">
    <property type="method" value="EM"/>
    <property type="resolution" value="7.10 A"/>
    <property type="chains" value="B6=2-273"/>
</dbReference>
<dbReference type="PDB" id="4V6N">
    <property type="method" value="EM"/>
    <property type="resolution" value="12.10 A"/>
    <property type="chains" value="AD=2-273"/>
</dbReference>
<dbReference type="PDB" id="4V6O">
    <property type="method" value="EM"/>
    <property type="resolution" value="14.70 A"/>
    <property type="chains" value="BD=2-273"/>
</dbReference>
<dbReference type="PDB" id="4V6P">
    <property type="method" value="EM"/>
    <property type="resolution" value="13.50 A"/>
    <property type="chains" value="BD=2-273"/>
</dbReference>
<dbReference type="PDB" id="4V6Q">
    <property type="method" value="EM"/>
    <property type="resolution" value="11.50 A"/>
    <property type="chains" value="BD=2-273"/>
</dbReference>
<dbReference type="PDB" id="4V6R">
    <property type="method" value="EM"/>
    <property type="resolution" value="11.50 A"/>
    <property type="chains" value="BD=2-273"/>
</dbReference>
<dbReference type="PDB" id="4V6S">
    <property type="method" value="EM"/>
    <property type="resolution" value="13.10 A"/>
    <property type="chains" value="AD=2-273"/>
</dbReference>
<dbReference type="PDB" id="4V6T">
    <property type="method" value="EM"/>
    <property type="resolution" value="8.30 A"/>
    <property type="chains" value="BC=2-272"/>
</dbReference>
<dbReference type="PDB" id="4V6V">
    <property type="method" value="EM"/>
    <property type="resolution" value="9.80 A"/>
    <property type="chains" value="BD=2-273"/>
</dbReference>
<dbReference type="PDB" id="4V6Y">
    <property type="method" value="EM"/>
    <property type="resolution" value="12.00 A"/>
    <property type="chains" value="BC=1-272"/>
</dbReference>
<dbReference type="PDB" id="4V6Z">
    <property type="method" value="EM"/>
    <property type="resolution" value="12.00 A"/>
    <property type="chains" value="BC=1-272"/>
</dbReference>
<dbReference type="PDB" id="4V70">
    <property type="method" value="EM"/>
    <property type="resolution" value="17.00 A"/>
    <property type="chains" value="BC=1-272"/>
</dbReference>
<dbReference type="PDB" id="4V71">
    <property type="method" value="EM"/>
    <property type="resolution" value="20.00 A"/>
    <property type="chains" value="BC=1-272"/>
</dbReference>
<dbReference type="PDB" id="4V72">
    <property type="method" value="EM"/>
    <property type="resolution" value="13.00 A"/>
    <property type="chains" value="BC=1-272"/>
</dbReference>
<dbReference type="PDB" id="4V73">
    <property type="method" value="EM"/>
    <property type="resolution" value="15.00 A"/>
    <property type="chains" value="BC=1-272"/>
</dbReference>
<dbReference type="PDB" id="4V74">
    <property type="method" value="EM"/>
    <property type="resolution" value="17.00 A"/>
    <property type="chains" value="BC=1-272"/>
</dbReference>
<dbReference type="PDB" id="4V75">
    <property type="method" value="EM"/>
    <property type="resolution" value="12.00 A"/>
    <property type="chains" value="BC=1-272"/>
</dbReference>
<dbReference type="PDB" id="4V76">
    <property type="method" value="EM"/>
    <property type="resolution" value="17.00 A"/>
    <property type="chains" value="BC=1-272"/>
</dbReference>
<dbReference type="PDB" id="4V77">
    <property type="method" value="EM"/>
    <property type="resolution" value="17.00 A"/>
    <property type="chains" value="BC=1-272"/>
</dbReference>
<dbReference type="PDB" id="4V78">
    <property type="method" value="EM"/>
    <property type="resolution" value="20.00 A"/>
    <property type="chains" value="BC=1-272"/>
</dbReference>
<dbReference type="PDB" id="4V79">
    <property type="method" value="EM"/>
    <property type="resolution" value="15.00 A"/>
    <property type="chains" value="BC=1-272"/>
</dbReference>
<dbReference type="PDB" id="4V7A">
    <property type="method" value="EM"/>
    <property type="resolution" value="9.00 A"/>
    <property type="chains" value="BC=1-272"/>
</dbReference>
<dbReference type="PDB" id="4V7B">
    <property type="method" value="EM"/>
    <property type="resolution" value="6.80 A"/>
    <property type="chains" value="BC=1-273"/>
</dbReference>
<dbReference type="PDB" id="4V7C">
    <property type="method" value="EM"/>
    <property type="resolution" value="7.60 A"/>
    <property type="chains" value="BD=2-273"/>
</dbReference>
<dbReference type="PDB" id="4V7D">
    <property type="method" value="EM"/>
    <property type="resolution" value="7.60 A"/>
    <property type="chains" value="AD=2-273"/>
</dbReference>
<dbReference type="PDB" id="4V7I">
    <property type="method" value="EM"/>
    <property type="resolution" value="9.60 A"/>
    <property type="chains" value="A6=1-273"/>
</dbReference>
<dbReference type="PDB" id="4V7S">
    <property type="method" value="X-ray"/>
    <property type="resolution" value="3.25 A"/>
    <property type="chains" value="BC/DC=2-272"/>
</dbReference>
<dbReference type="PDB" id="4V7T">
    <property type="method" value="X-ray"/>
    <property type="resolution" value="3.19 A"/>
    <property type="chains" value="BC/DC=2-272"/>
</dbReference>
<dbReference type="PDB" id="4V7U">
    <property type="method" value="X-ray"/>
    <property type="resolution" value="3.10 A"/>
    <property type="chains" value="BC/DC=2-272"/>
</dbReference>
<dbReference type="PDB" id="4V7V">
    <property type="method" value="X-ray"/>
    <property type="resolution" value="3.29 A"/>
    <property type="chains" value="BC/DC=2-272"/>
</dbReference>
<dbReference type="PDB" id="4V85">
    <property type="method" value="X-ray"/>
    <property type="resolution" value="3.20 A"/>
    <property type="chains" value="BC=1-273"/>
</dbReference>
<dbReference type="PDB" id="4V89">
    <property type="method" value="X-ray"/>
    <property type="resolution" value="3.70 A"/>
    <property type="chains" value="BC=1-273"/>
</dbReference>
<dbReference type="PDB" id="4V9C">
    <property type="method" value="X-ray"/>
    <property type="resolution" value="3.30 A"/>
    <property type="chains" value="BC/DC=1-273"/>
</dbReference>
<dbReference type="PDB" id="4V9D">
    <property type="method" value="X-ray"/>
    <property type="resolution" value="3.00 A"/>
    <property type="chains" value="CC/DC=2-272"/>
</dbReference>
<dbReference type="PDB" id="4V9O">
    <property type="method" value="X-ray"/>
    <property type="resolution" value="2.90 A"/>
    <property type="chains" value="AC/CC/EC/GC=1-273"/>
</dbReference>
<dbReference type="PDB" id="4V9P">
    <property type="method" value="X-ray"/>
    <property type="resolution" value="2.90 A"/>
    <property type="chains" value="AC/CC/EC/GC=1-273"/>
</dbReference>
<dbReference type="PDB" id="4WF1">
    <property type="method" value="X-ray"/>
    <property type="resolution" value="3.09 A"/>
    <property type="chains" value="BC/DC=2-272"/>
</dbReference>
<dbReference type="PDB" id="4WOI">
    <property type="method" value="X-ray"/>
    <property type="resolution" value="3.00 A"/>
    <property type="chains" value="BC/CC=1-273"/>
</dbReference>
<dbReference type="PDB" id="4WWW">
    <property type="method" value="X-ray"/>
    <property type="resolution" value="3.10 A"/>
    <property type="chains" value="RC/YC=2-272"/>
</dbReference>
<dbReference type="PDB" id="4YBB">
    <property type="method" value="X-ray"/>
    <property type="resolution" value="2.10 A"/>
    <property type="chains" value="CC/DC=2-272"/>
</dbReference>
<dbReference type="PDB" id="5ADY">
    <property type="method" value="EM"/>
    <property type="resolution" value="4.50 A"/>
    <property type="chains" value="C=1-273"/>
</dbReference>
<dbReference type="PDB" id="5AFI">
    <property type="method" value="EM"/>
    <property type="resolution" value="2.90 A"/>
    <property type="chains" value="C=1-273"/>
</dbReference>
<dbReference type="PDB" id="5AKA">
    <property type="method" value="EM"/>
    <property type="resolution" value="5.70 A"/>
    <property type="chains" value="C=1-273"/>
</dbReference>
<dbReference type="PDB" id="5GAD">
    <property type="method" value="EM"/>
    <property type="resolution" value="3.70 A"/>
    <property type="chains" value="C=1-273"/>
</dbReference>
<dbReference type="PDB" id="5GAE">
    <property type="method" value="EM"/>
    <property type="resolution" value="3.33 A"/>
    <property type="chains" value="C=1-273"/>
</dbReference>
<dbReference type="PDB" id="5GAF">
    <property type="method" value="EM"/>
    <property type="resolution" value="4.30 A"/>
    <property type="chains" value="C=2-272"/>
</dbReference>
<dbReference type="PDB" id="5GAG">
    <property type="method" value="EM"/>
    <property type="resolution" value="3.80 A"/>
    <property type="chains" value="C=1-273"/>
</dbReference>
<dbReference type="PDB" id="5GAH">
    <property type="method" value="EM"/>
    <property type="resolution" value="3.80 A"/>
    <property type="chains" value="C=1-273"/>
</dbReference>
<dbReference type="PDB" id="5H5U">
    <property type="method" value="EM"/>
    <property type="resolution" value="3.00 A"/>
    <property type="chains" value="C=2-273"/>
</dbReference>
<dbReference type="PDB" id="5IQR">
    <property type="method" value="EM"/>
    <property type="resolution" value="3.00 A"/>
    <property type="chains" value="B=1-273"/>
</dbReference>
<dbReference type="PDB" id="5IT8">
    <property type="method" value="X-ray"/>
    <property type="resolution" value="3.12 A"/>
    <property type="chains" value="CC/DC=2-272"/>
</dbReference>
<dbReference type="PDB" id="5J5B">
    <property type="method" value="X-ray"/>
    <property type="resolution" value="2.80 A"/>
    <property type="chains" value="CC/DC=2-272"/>
</dbReference>
<dbReference type="PDB" id="5J7L">
    <property type="method" value="X-ray"/>
    <property type="resolution" value="3.00 A"/>
    <property type="chains" value="CC/DC=2-272"/>
</dbReference>
<dbReference type="PDB" id="5J88">
    <property type="method" value="X-ray"/>
    <property type="resolution" value="3.32 A"/>
    <property type="chains" value="CC/DC=2-273"/>
</dbReference>
<dbReference type="PDB" id="5J8A">
    <property type="method" value="X-ray"/>
    <property type="resolution" value="3.10 A"/>
    <property type="chains" value="CC/DC=2-273"/>
</dbReference>
<dbReference type="PDB" id="5J91">
    <property type="method" value="X-ray"/>
    <property type="resolution" value="2.96 A"/>
    <property type="chains" value="CC/DC=2-273"/>
</dbReference>
<dbReference type="PDB" id="5JC9">
    <property type="method" value="X-ray"/>
    <property type="resolution" value="3.03 A"/>
    <property type="chains" value="CC/DC=2-272"/>
</dbReference>
<dbReference type="PDB" id="5JTE">
    <property type="method" value="EM"/>
    <property type="resolution" value="3.60 A"/>
    <property type="chains" value="BC=1-273"/>
</dbReference>
<dbReference type="PDB" id="5JU8">
    <property type="method" value="EM"/>
    <property type="resolution" value="3.60 A"/>
    <property type="chains" value="BC=1-273"/>
</dbReference>
<dbReference type="PDB" id="5KCR">
    <property type="method" value="EM"/>
    <property type="resolution" value="3.60 A"/>
    <property type="chains" value="1D=1-273"/>
</dbReference>
<dbReference type="PDB" id="5KCS">
    <property type="method" value="EM"/>
    <property type="resolution" value="3.90 A"/>
    <property type="chains" value="1D=1-273"/>
</dbReference>
<dbReference type="PDB" id="5KPS">
    <property type="method" value="EM"/>
    <property type="resolution" value="3.90 A"/>
    <property type="chains" value="B=1-273"/>
</dbReference>
<dbReference type="PDB" id="5KPV">
    <property type="method" value="EM"/>
    <property type="resolution" value="4.10 A"/>
    <property type="chains" value="A=1-273"/>
</dbReference>
<dbReference type="PDB" id="5KPW">
    <property type="method" value="EM"/>
    <property type="resolution" value="3.90 A"/>
    <property type="chains" value="A=1-273"/>
</dbReference>
<dbReference type="PDB" id="5KPX">
    <property type="method" value="EM"/>
    <property type="resolution" value="3.90 A"/>
    <property type="chains" value="A=1-273"/>
</dbReference>
<dbReference type="PDB" id="5L3P">
    <property type="method" value="EM"/>
    <property type="resolution" value="3.70 A"/>
    <property type="chains" value="D=1-273"/>
</dbReference>
<dbReference type="PDB" id="5LZA">
    <property type="method" value="EM"/>
    <property type="resolution" value="3.60 A"/>
    <property type="chains" value="C=2-272"/>
</dbReference>
<dbReference type="PDB" id="5LZB">
    <property type="method" value="EM"/>
    <property type="resolution" value="5.30 A"/>
    <property type="chains" value="C=2-272"/>
</dbReference>
<dbReference type="PDB" id="5LZC">
    <property type="method" value="EM"/>
    <property type="resolution" value="4.80 A"/>
    <property type="chains" value="C=2-272"/>
</dbReference>
<dbReference type="PDB" id="5LZD">
    <property type="method" value="EM"/>
    <property type="resolution" value="3.40 A"/>
    <property type="chains" value="C=2-272"/>
</dbReference>
<dbReference type="PDB" id="5LZE">
    <property type="method" value="EM"/>
    <property type="resolution" value="3.50 A"/>
    <property type="chains" value="C=2-272"/>
</dbReference>
<dbReference type="PDB" id="5LZF">
    <property type="method" value="EM"/>
    <property type="resolution" value="4.60 A"/>
    <property type="chains" value="C=2-272"/>
</dbReference>
<dbReference type="PDB" id="5MDV">
    <property type="method" value="EM"/>
    <property type="resolution" value="2.97 A"/>
    <property type="chains" value="B=1-273"/>
</dbReference>
<dbReference type="PDB" id="5MDW">
    <property type="method" value="EM"/>
    <property type="resolution" value="3.06 A"/>
    <property type="chains" value="B=1-273"/>
</dbReference>
<dbReference type="PDB" id="5MDY">
    <property type="method" value="EM"/>
    <property type="resolution" value="3.35 A"/>
    <property type="chains" value="B=1-273"/>
</dbReference>
<dbReference type="PDB" id="5MDZ">
    <property type="method" value="EM"/>
    <property type="resolution" value="3.10 A"/>
    <property type="chains" value="B=1-273"/>
</dbReference>
<dbReference type="PDB" id="5MGP">
    <property type="method" value="EM"/>
    <property type="resolution" value="3.10 A"/>
    <property type="chains" value="C=2-272"/>
</dbReference>
<dbReference type="PDB" id="5NCO">
    <property type="method" value="EM"/>
    <property type="resolution" value="4.80 A"/>
    <property type="chains" value="C=2-272"/>
</dbReference>
<dbReference type="PDB" id="5NP6">
    <property type="method" value="EM"/>
    <property type="resolution" value="3.60 A"/>
    <property type="chains" value="a=2-272"/>
</dbReference>
<dbReference type="PDB" id="5NWY">
    <property type="method" value="EM"/>
    <property type="resolution" value="2.93 A"/>
    <property type="chains" value="P=1-273"/>
</dbReference>
<dbReference type="PDB" id="5O2R">
    <property type="method" value="EM"/>
    <property type="resolution" value="3.40 A"/>
    <property type="chains" value="C=2-272"/>
</dbReference>
<dbReference type="PDB" id="5U4I">
    <property type="method" value="EM"/>
    <property type="resolution" value="3.50 A"/>
    <property type="chains" value="C=1-273"/>
</dbReference>
<dbReference type="PDB" id="5U9F">
    <property type="method" value="EM"/>
    <property type="resolution" value="3.20 A"/>
    <property type="chains" value="04=1-273"/>
</dbReference>
<dbReference type="PDB" id="5U9G">
    <property type="method" value="EM"/>
    <property type="resolution" value="3.20 A"/>
    <property type="chains" value="04=1-273"/>
</dbReference>
<dbReference type="PDB" id="5UYK">
    <property type="method" value="EM"/>
    <property type="resolution" value="3.90 A"/>
    <property type="chains" value="04=2-272"/>
</dbReference>
<dbReference type="PDB" id="5UYL">
    <property type="method" value="EM"/>
    <property type="resolution" value="3.60 A"/>
    <property type="chains" value="04=2-272"/>
</dbReference>
<dbReference type="PDB" id="5UYM">
    <property type="method" value="EM"/>
    <property type="resolution" value="3.20 A"/>
    <property type="chains" value="04=2-272"/>
</dbReference>
<dbReference type="PDB" id="5UYN">
    <property type="method" value="EM"/>
    <property type="resolution" value="4.00 A"/>
    <property type="chains" value="04=2-272"/>
</dbReference>
<dbReference type="PDB" id="5UYP">
    <property type="method" value="EM"/>
    <property type="resolution" value="3.90 A"/>
    <property type="chains" value="04=2-272"/>
</dbReference>
<dbReference type="PDB" id="5UYQ">
    <property type="method" value="EM"/>
    <property type="resolution" value="3.80 A"/>
    <property type="chains" value="04=2-272"/>
</dbReference>
<dbReference type="PDB" id="5WDT">
    <property type="method" value="EM"/>
    <property type="resolution" value="3.00 A"/>
    <property type="chains" value="C=2-272"/>
</dbReference>
<dbReference type="PDB" id="5WE4">
    <property type="method" value="EM"/>
    <property type="resolution" value="3.10 A"/>
    <property type="chains" value="C=2-272"/>
</dbReference>
<dbReference type="PDB" id="5WE6">
    <property type="method" value="EM"/>
    <property type="resolution" value="3.40 A"/>
    <property type="chains" value="C=2-272"/>
</dbReference>
<dbReference type="PDB" id="5WF0">
    <property type="method" value="EM"/>
    <property type="resolution" value="3.60 A"/>
    <property type="chains" value="C=2-272"/>
</dbReference>
<dbReference type="PDB" id="5WFK">
    <property type="method" value="EM"/>
    <property type="resolution" value="3.40 A"/>
    <property type="chains" value="C=2-272"/>
</dbReference>
<dbReference type="PDB" id="5WFS">
    <property type="method" value="EM"/>
    <property type="resolution" value="3.00 A"/>
    <property type="chains" value="C=2-272"/>
</dbReference>
<dbReference type="PDB" id="6BU8">
    <property type="method" value="EM"/>
    <property type="resolution" value="3.50 A"/>
    <property type="chains" value="04=2-272"/>
</dbReference>
<dbReference type="PDB" id="6BY1">
    <property type="method" value="X-ray"/>
    <property type="resolution" value="3.94 A"/>
    <property type="chains" value="CC/DC=2-272"/>
</dbReference>
<dbReference type="PDB" id="6C4H">
    <property type="method" value="EM"/>
    <property type="resolution" value="3.10 A"/>
    <property type="chains" value="C=1-273"/>
</dbReference>
<dbReference type="PDB" id="6C4I">
    <property type="method" value="EM"/>
    <property type="resolution" value="3.24 A"/>
    <property type="chains" value="C=1-273"/>
</dbReference>
<dbReference type="PDB" id="6DNC">
    <property type="method" value="EM"/>
    <property type="resolution" value="3.70 A"/>
    <property type="chains" value="F=1-273"/>
</dbReference>
<dbReference type="PDB" id="6ENF">
    <property type="method" value="EM"/>
    <property type="resolution" value="3.20 A"/>
    <property type="chains" value="C=2-272"/>
</dbReference>
<dbReference type="PDB" id="6ENJ">
    <property type="method" value="EM"/>
    <property type="resolution" value="3.70 A"/>
    <property type="chains" value="C=2-272"/>
</dbReference>
<dbReference type="PDB" id="6ENU">
    <property type="method" value="EM"/>
    <property type="resolution" value="3.10 A"/>
    <property type="chains" value="C=2-272"/>
</dbReference>
<dbReference type="PDB" id="6GBZ">
    <property type="method" value="EM"/>
    <property type="resolution" value="3.80 A"/>
    <property type="chains" value="C=2-272"/>
</dbReference>
<dbReference type="PDB" id="6GC0">
    <property type="method" value="EM"/>
    <property type="resolution" value="3.80 A"/>
    <property type="chains" value="C=2-272"/>
</dbReference>
<dbReference type="PDB" id="6GC4">
    <property type="method" value="EM"/>
    <property type="resolution" value="4.30 A"/>
    <property type="chains" value="C=2-272"/>
</dbReference>
<dbReference type="PDB" id="6GC6">
    <property type="method" value="EM"/>
    <property type="resolution" value="4.30 A"/>
    <property type="chains" value="C=2-224"/>
</dbReference>
<dbReference type="PDB" id="6GC8">
    <property type="method" value="EM"/>
    <property type="resolution" value="3.80 A"/>
    <property type="chains" value="C=2-272"/>
</dbReference>
<dbReference type="PDB" id="6GWT">
    <property type="method" value="EM"/>
    <property type="resolution" value="3.80 A"/>
    <property type="chains" value="C=2-272"/>
</dbReference>
<dbReference type="PDB" id="6GXM">
    <property type="method" value="EM"/>
    <property type="resolution" value="3.80 A"/>
    <property type="chains" value="C=2-272"/>
</dbReference>
<dbReference type="PDB" id="6GXN">
    <property type="method" value="EM"/>
    <property type="resolution" value="3.90 A"/>
    <property type="chains" value="C=2-272"/>
</dbReference>
<dbReference type="PDB" id="6GXO">
    <property type="method" value="EM"/>
    <property type="resolution" value="3.90 A"/>
    <property type="chains" value="C=2-272"/>
</dbReference>
<dbReference type="PDB" id="6GXP">
    <property type="method" value="EM"/>
    <property type="resolution" value="4.40 A"/>
    <property type="chains" value="C=2-272"/>
</dbReference>
<dbReference type="PDB" id="6H4N">
    <property type="method" value="EM"/>
    <property type="resolution" value="3.00 A"/>
    <property type="chains" value="C=2-272"/>
</dbReference>
<dbReference type="PDB" id="6H58">
    <property type="method" value="EM"/>
    <property type="resolution" value="7.90 A"/>
    <property type="chains" value="C/CC=2-272"/>
</dbReference>
<dbReference type="PDB" id="6HRM">
    <property type="method" value="EM"/>
    <property type="resolution" value="2.96 A"/>
    <property type="chains" value="B=2-272"/>
</dbReference>
<dbReference type="PDB" id="6I0Y">
    <property type="method" value="EM"/>
    <property type="resolution" value="3.20 A"/>
    <property type="chains" value="C=1-273"/>
</dbReference>
<dbReference type="PDB" id="6I7V">
    <property type="method" value="X-ray"/>
    <property type="resolution" value="2.90 A"/>
    <property type="chains" value="CC/DC=2-272"/>
</dbReference>
<dbReference type="PDB" id="6O9J">
    <property type="method" value="EM"/>
    <property type="resolution" value="3.90 A"/>
    <property type="chains" value="C=4-270"/>
</dbReference>
<dbReference type="PDB" id="6O9K">
    <property type="method" value="EM"/>
    <property type="resolution" value="4.00 A"/>
    <property type="chains" value="9=2-272"/>
</dbReference>
<dbReference type="PDB" id="6OFX">
    <property type="method" value="EM"/>
    <property type="resolution" value="3.30 A"/>
    <property type="chains" value="b=2-272"/>
</dbReference>
<dbReference type="PDB" id="6OG7">
    <property type="method" value="EM"/>
    <property type="resolution" value="3.30 A"/>
    <property type="chains" value="b=2-272"/>
</dbReference>
<dbReference type="PDB" id="6OGF">
    <property type="method" value="EM"/>
    <property type="resolution" value="3.90 A"/>
    <property type="chains" value="b=1-273"/>
</dbReference>
<dbReference type="PDB" id="6OGG">
    <property type="method" value="EM"/>
    <property type="resolution" value="4.20 A"/>
    <property type="chains" value="b=1-273"/>
</dbReference>
<dbReference type="PDB" id="6OGI">
    <property type="method" value="EM"/>
    <property type="resolution" value="3.40 A"/>
    <property type="chains" value="b=1-273"/>
</dbReference>
<dbReference type="PDB" id="6OM6">
    <property type="method" value="EM"/>
    <property type="resolution" value="3.10 A"/>
    <property type="chains" value="B=1-273"/>
</dbReference>
<dbReference type="PDB" id="6ORE">
    <property type="method" value="EM"/>
    <property type="resolution" value="2.90 A"/>
    <property type="chains" value="B=2-272"/>
</dbReference>
<dbReference type="PDB" id="6ORL">
    <property type="method" value="EM"/>
    <property type="resolution" value="3.50 A"/>
    <property type="chains" value="B=2-272"/>
</dbReference>
<dbReference type="PDB" id="6OSK">
    <property type="method" value="EM"/>
    <property type="resolution" value="3.60 A"/>
    <property type="chains" value="B=2-272"/>
</dbReference>
<dbReference type="PDB" id="6OSQ">
    <property type="method" value="EM"/>
    <property type="resolution" value="3.50 A"/>
    <property type="chains" value="B=2-272"/>
</dbReference>
<dbReference type="PDB" id="6OST">
    <property type="method" value="EM"/>
    <property type="resolution" value="4.20 A"/>
    <property type="chains" value="B=2-272"/>
</dbReference>
<dbReference type="PDB" id="6OT3">
    <property type="method" value="EM"/>
    <property type="resolution" value="3.90 A"/>
    <property type="chains" value="B=2-272"/>
</dbReference>
<dbReference type="PDB" id="6OUO">
    <property type="method" value="EM"/>
    <property type="resolution" value="3.70 A"/>
    <property type="chains" value="B=2-272"/>
</dbReference>
<dbReference type="PDB" id="6PC5">
    <property type="method" value="EM"/>
    <property type="resolution" value="2.70 A"/>
    <property type="chains" value="K=2-272"/>
</dbReference>
<dbReference type="PDB" id="6PC6">
    <property type="method" value="EM"/>
    <property type="resolution" value="2.50 A"/>
    <property type="chains" value="K=2-272"/>
</dbReference>
<dbReference type="PDB" id="6PC7">
    <property type="method" value="EM"/>
    <property type="resolution" value="2.50 A"/>
    <property type="chains" value="K=2-272"/>
</dbReference>
<dbReference type="PDB" id="6PC8">
    <property type="method" value="EM"/>
    <property type="resolution" value="2.90 A"/>
    <property type="chains" value="K=2-272"/>
</dbReference>
<dbReference type="PDB" id="6PCH">
    <property type="method" value="EM"/>
    <property type="resolution" value="2.90 A"/>
    <property type="chains" value="K=2-272"/>
</dbReference>
<dbReference type="PDB" id="6PCQ">
    <property type="method" value="EM"/>
    <property type="resolution" value="2.60 A"/>
    <property type="chains" value="K=2-272"/>
</dbReference>
<dbReference type="PDB" id="6PCR">
    <property type="method" value="EM"/>
    <property type="resolution" value="2.50 A"/>
    <property type="chains" value="K=2-272"/>
</dbReference>
<dbReference type="PDB" id="6PCS">
    <property type="method" value="EM"/>
    <property type="resolution" value="2.80 A"/>
    <property type="chains" value="K=2-272"/>
</dbReference>
<dbReference type="PDB" id="6PCT">
    <property type="method" value="EM"/>
    <property type="resolution" value="2.80 A"/>
    <property type="chains" value="K=2-272"/>
</dbReference>
<dbReference type="PDB" id="6PJ6">
    <property type="method" value="EM"/>
    <property type="resolution" value="2.20 A"/>
    <property type="chains" value="K=2-272"/>
</dbReference>
<dbReference type="PDB" id="6Q98">
    <property type="method" value="EM"/>
    <property type="resolution" value="4.30 A"/>
    <property type="chains" value="B=1-273"/>
</dbReference>
<dbReference type="PDB" id="6Q9A">
    <property type="method" value="EM"/>
    <property type="resolution" value="3.70 A"/>
    <property type="chains" value="B=2-272"/>
</dbReference>
<dbReference type="PDB" id="6QDW">
    <property type="method" value="EM"/>
    <property type="resolution" value="2.83 A"/>
    <property type="chains" value="c=1-273"/>
</dbReference>
<dbReference type="PDB" id="6QUL">
    <property type="method" value="EM"/>
    <property type="resolution" value="3.00 A"/>
    <property type="chains" value="C=1-273"/>
</dbReference>
<dbReference type="PDB" id="6S0K">
    <property type="method" value="EM"/>
    <property type="resolution" value="3.10 A"/>
    <property type="chains" value="C=1-273"/>
</dbReference>
<dbReference type="PDB" id="6SZS">
    <property type="method" value="EM"/>
    <property type="resolution" value="3.06 A"/>
    <property type="chains" value="C=1-273"/>
</dbReference>
<dbReference type="PDB" id="6TBV">
    <property type="method" value="EM"/>
    <property type="resolution" value="2.70 A"/>
    <property type="chains" value="L021=1-273"/>
</dbReference>
<dbReference type="PDB" id="6TC3">
    <property type="method" value="EM"/>
    <property type="resolution" value="2.70 A"/>
    <property type="chains" value="L021=1-273"/>
</dbReference>
<dbReference type="PDB" id="6U48">
    <property type="method" value="EM"/>
    <property type="resolution" value="2.87 A"/>
    <property type="chains" value="CC=2-272"/>
</dbReference>
<dbReference type="PDB" id="6VU3">
    <property type="method" value="EM"/>
    <property type="resolution" value="3.70 A"/>
    <property type="chains" value="h=2-272"/>
</dbReference>
<dbReference type="PDB" id="6VWL">
    <property type="method" value="EM"/>
    <property type="resolution" value="3.10 A"/>
    <property type="chains" value="A=1-273"/>
</dbReference>
<dbReference type="PDB" id="6VWM">
    <property type="method" value="EM"/>
    <property type="resolution" value="3.40 A"/>
    <property type="chains" value="A=1-273"/>
</dbReference>
<dbReference type="PDB" id="6VWN">
    <property type="method" value="EM"/>
    <property type="resolution" value="3.40 A"/>
    <property type="chains" value="A=1-273"/>
</dbReference>
<dbReference type="PDB" id="6VYQ">
    <property type="method" value="EM"/>
    <property type="resolution" value="3.70 A"/>
    <property type="chains" value="h=1-273"/>
</dbReference>
<dbReference type="PDB" id="6VYR">
    <property type="method" value="EM"/>
    <property type="resolution" value="3.80 A"/>
    <property type="chains" value="h=1-273"/>
</dbReference>
<dbReference type="PDB" id="6VYS">
    <property type="method" value="EM"/>
    <property type="resolution" value="3.70 A"/>
    <property type="chains" value="h=1-273"/>
</dbReference>
<dbReference type="PDB" id="6VYT">
    <property type="method" value="EM"/>
    <property type="resolution" value="14.00 A"/>
    <property type="chains" value="h=1-273"/>
</dbReference>
<dbReference type="PDB" id="6VYU">
    <property type="method" value="EM"/>
    <property type="resolution" value="7.00 A"/>
    <property type="chains" value="h=1-273"/>
</dbReference>
<dbReference type="PDB" id="6VYW">
    <property type="method" value="EM"/>
    <property type="resolution" value="7.00 A"/>
    <property type="chains" value="h=1-273"/>
</dbReference>
<dbReference type="PDB" id="6VYX">
    <property type="method" value="EM"/>
    <property type="resolution" value="9.90 A"/>
    <property type="chains" value="h=1-273"/>
</dbReference>
<dbReference type="PDB" id="6VYY">
    <property type="method" value="EM"/>
    <property type="resolution" value="9.90 A"/>
    <property type="chains" value="h=1-273"/>
</dbReference>
<dbReference type="PDB" id="6VYZ">
    <property type="method" value="EM"/>
    <property type="resolution" value="9.90 A"/>
    <property type="chains" value="h=1-273"/>
</dbReference>
<dbReference type="PDB" id="6VZ2">
    <property type="method" value="EM"/>
    <property type="resolution" value="10.00 A"/>
    <property type="chains" value="h=2-272"/>
</dbReference>
<dbReference type="PDB" id="6VZ3">
    <property type="method" value="EM"/>
    <property type="resolution" value="8.90 A"/>
    <property type="chains" value="h=2-272"/>
</dbReference>
<dbReference type="PDB" id="6VZ5">
    <property type="method" value="EM"/>
    <property type="resolution" value="8.90 A"/>
    <property type="chains" value="h=1-273"/>
</dbReference>
<dbReference type="PDB" id="6VZ7">
    <property type="method" value="EM"/>
    <property type="resolution" value="7.00 A"/>
    <property type="chains" value="h=2-272"/>
</dbReference>
<dbReference type="PDB" id="6VZJ">
    <property type="method" value="EM"/>
    <property type="resolution" value="4.10 A"/>
    <property type="chains" value="h=2-272"/>
</dbReference>
<dbReference type="PDB" id="6WD0">
    <property type="method" value="EM"/>
    <property type="resolution" value="3.00 A"/>
    <property type="chains" value="b=2-272"/>
</dbReference>
<dbReference type="PDB" id="6WD1">
    <property type="method" value="EM"/>
    <property type="resolution" value="3.30 A"/>
    <property type="chains" value="b=2-272"/>
</dbReference>
<dbReference type="PDB" id="6WD2">
    <property type="method" value="EM"/>
    <property type="resolution" value="3.60 A"/>
    <property type="chains" value="b=2-272"/>
</dbReference>
<dbReference type="PDB" id="6WD3">
    <property type="method" value="EM"/>
    <property type="resolution" value="3.60 A"/>
    <property type="chains" value="b=2-272"/>
</dbReference>
<dbReference type="PDB" id="6WD4">
    <property type="method" value="EM"/>
    <property type="resolution" value="3.70 A"/>
    <property type="chains" value="b=2-272"/>
</dbReference>
<dbReference type="PDB" id="6WD5">
    <property type="method" value="EM"/>
    <property type="resolution" value="3.60 A"/>
    <property type="chains" value="b=2-272"/>
</dbReference>
<dbReference type="PDB" id="6WD6">
    <property type="method" value="EM"/>
    <property type="resolution" value="3.70 A"/>
    <property type="chains" value="b=2-272"/>
</dbReference>
<dbReference type="PDB" id="6WD7">
    <property type="method" value="EM"/>
    <property type="resolution" value="3.90 A"/>
    <property type="chains" value="b=2-272"/>
</dbReference>
<dbReference type="PDB" id="6WD8">
    <property type="method" value="EM"/>
    <property type="resolution" value="3.70 A"/>
    <property type="chains" value="b=2-272"/>
</dbReference>
<dbReference type="PDB" id="6WD9">
    <property type="method" value="EM"/>
    <property type="resolution" value="3.70 A"/>
    <property type="chains" value="b=2-272"/>
</dbReference>
<dbReference type="PDB" id="6WDA">
    <property type="method" value="EM"/>
    <property type="resolution" value="3.80 A"/>
    <property type="chains" value="b=2-272"/>
</dbReference>
<dbReference type="PDB" id="6WDB">
    <property type="method" value="EM"/>
    <property type="resolution" value="4.00 A"/>
    <property type="chains" value="b=2-272"/>
</dbReference>
<dbReference type="PDB" id="6WDC">
    <property type="method" value="EM"/>
    <property type="resolution" value="4.20 A"/>
    <property type="chains" value="b=2-272"/>
</dbReference>
<dbReference type="PDB" id="6WDD">
    <property type="method" value="EM"/>
    <property type="resolution" value="3.20 A"/>
    <property type="chains" value="b=2-272"/>
</dbReference>
<dbReference type="PDB" id="6WDE">
    <property type="method" value="EM"/>
    <property type="resolution" value="3.00 A"/>
    <property type="chains" value="b=2-272"/>
</dbReference>
<dbReference type="PDB" id="6WDF">
    <property type="method" value="EM"/>
    <property type="resolution" value="3.30 A"/>
    <property type="chains" value="b=2-272"/>
</dbReference>
<dbReference type="PDB" id="6WDG">
    <property type="method" value="EM"/>
    <property type="resolution" value="3.30 A"/>
    <property type="chains" value="b=2-272"/>
</dbReference>
<dbReference type="PDB" id="6WDH">
    <property type="method" value="EM"/>
    <property type="resolution" value="4.30 A"/>
    <property type="chains" value="b=2-272"/>
</dbReference>
<dbReference type="PDB" id="6WDI">
    <property type="method" value="EM"/>
    <property type="resolution" value="4.00 A"/>
    <property type="chains" value="b=2-272"/>
</dbReference>
<dbReference type="PDB" id="6WDJ">
    <property type="method" value="EM"/>
    <property type="resolution" value="3.70 A"/>
    <property type="chains" value="b=2-272"/>
</dbReference>
<dbReference type="PDB" id="6WDK">
    <property type="method" value="EM"/>
    <property type="resolution" value="3.60 A"/>
    <property type="chains" value="b=2-272"/>
</dbReference>
<dbReference type="PDB" id="6WDL">
    <property type="method" value="EM"/>
    <property type="resolution" value="3.70 A"/>
    <property type="chains" value="b=2-272"/>
</dbReference>
<dbReference type="PDB" id="6WDM">
    <property type="method" value="EM"/>
    <property type="resolution" value="3.60 A"/>
    <property type="chains" value="b=2-272"/>
</dbReference>
<dbReference type="PDB" id="6WNT">
    <property type="method" value="EM"/>
    <property type="resolution" value="3.10 A"/>
    <property type="chains" value="b=2-272"/>
</dbReference>
<dbReference type="PDB" id="6WNV">
    <property type="method" value="EM"/>
    <property type="resolution" value="3.50 A"/>
    <property type="chains" value="b=2-272"/>
</dbReference>
<dbReference type="PDB" id="6WNW">
    <property type="method" value="EM"/>
    <property type="resolution" value="3.20 A"/>
    <property type="chains" value="b=2-272"/>
</dbReference>
<dbReference type="PDB" id="6WYV">
    <property type="method" value="EM"/>
    <property type="resolution" value="2.75 A"/>
    <property type="chains" value="K=2-272"/>
</dbReference>
<dbReference type="PDB" id="6X6T">
    <property type="method" value="EM"/>
    <property type="resolution" value="3.20 A"/>
    <property type="chains" value="h=1-273"/>
</dbReference>
<dbReference type="PDB" id="6X7F">
    <property type="method" value="EM"/>
    <property type="resolution" value="3.50 A"/>
    <property type="chains" value="h=1-273"/>
</dbReference>
<dbReference type="PDB" id="6X7K">
    <property type="method" value="EM"/>
    <property type="resolution" value="3.10 A"/>
    <property type="chains" value="h=1-273"/>
</dbReference>
<dbReference type="PDB" id="6X9Q">
    <property type="method" value="EM"/>
    <property type="resolution" value="4.80 A"/>
    <property type="chains" value="h=1-273"/>
</dbReference>
<dbReference type="PDB" id="6XDQ">
    <property type="method" value="EM"/>
    <property type="resolution" value="3.70 A"/>
    <property type="chains" value="h=1-273"/>
</dbReference>
<dbReference type="PDB" id="6XDR">
    <property type="method" value="EM"/>
    <property type="resolution" value="4.70 A"/>
    <property type="chains" value="h=1-273"/>
</dbReference>
<dbReference type="PDB" id="6XGF">
    <property type="method" value="EM"/>
    <property type="resolution" value="5.00 A"/>
    <property type="chains" value="h=1-273"/>
</dbReference>
<dbReference type="PDB" id="6XII">
    <property type="method" value="EM"/>
    <property type="resolution" value="7.00 A"/>
    <property type="chains" value="h=1-273"/>
</dbReference>
<dbReference type="PDB" id="6XIJ">
    <property type="method" value="EM"/>
    <property type="resolution" value="8.00 A"/>
    <property type="chains" value="h=1-273"/>
</dbReference>
<dbReference type="PDB" id="6XZ7">
    <property type="method" value="EM"/>
    <property type="resolution" value="2.10 A"/>
    <property type="chains" value="C=2-272"/>
</dbReference>
<dbReference type="PDB" id="6XZA">
    <property type="method" value="EM"/>
    <property type="resolution" value="2.66 A"/>
    <property type="chains" value="C2=2-272"/>
</dbReference>
<dbReference type="PDB" id="6XZB">
    <property type="method" value="EM"/>
    <property type="resolution" value="2.54 A"/>
    <property type="chains" value="C2=2-272"/>
</dbReference>
<dbReference type="PDB" id="6Y69">
    <property type="method" value="EM"/>
    <property type="resolution" value="2.86 A"/>
    <property type="chains" value="C=2-272"/>
</dbReference>
<dbReference type="PDB" id="6YS3">
    <property type="method" value="EM"/>
    <property type="resolution" value="2.58 A"/>
    <property type="chains" value="c=1-273"/>
</dbReference>
<dbReference type="PDB" id="6YSR">
    <property type="method" value="EM"/>
    <property type="resolution" value="3.10 A"/>
    <property type="chains" value="C=1-273"/>
</dbReference>
<dbReference type="PDB" id="6YSS">
    <property type="method" value="EM"/>
    <property type="resolution" value="2.60 A"/>
    <property type="chains" value="C=1-273"/>
</dbReference>
<dbReference type="PDB" id="6YST">
    <property type="method" value="EM"/>
    <property type="resolution" value="3.20 A"/>
    <property type="chains" value="C=1-273"/>
</dbReference>
<dbReference type="PDB" id="6YSU">
    <property type="method" value="EM"/>
    <property type="resolution" value="3.70 A"/>
    <property type="chains" value="C=1-273"/>
</dbReference>
<dbReference type="PDB" id="6ZTJ">
    <property type="method" value="EM"/>
    <property type="resolution" value="3.40 A"/>
    <property type="chains" value="BC=1-273"/>
</dbReference>
<dbReference type="PDB" id="6ZTL">
    <property type="method" value="EM"/>
    <property type="resolution" value="3.50 A"/>
    <property type="chains" value="BC=1-273"/>
</dbReference>
<dbReference type="PDB" id="6ZTM">
    <property type="method" value="EM"/>
    <property type="resolution" value="3.30 A"/>
    <property type="chains" value="BC=1-273"/>
</dbReference>
<dbReference type="PDB" id="6ZTN">
    <property type="method" value="EM"/>
    <property type="resolution" value="3.90 A"/>
    <property type="chains" value="BC=1-273"/>
</dbReference>
<dbReference type="PDB" id="6ZTO">
    <property type="method" value="EM"/>
    <property type="resolution" value="3.00 A"/>
    <property type="chains" value="BC=1-273"/>
</dbReference>
<dbReference type="PDB" id="6ZTP">
    <property type="method" value="EM"/>
    <property type="resolution" value="3.00 A"/>
    <property type="chains" value="BC=1-273"/>
</dbReference>
<dbReference type="PDB" id="6ZU1">
    <property type="method" value="EM"/>
    <property type="resolution" value="3.00 A"/>
    <property type="chains" value="BC=1-273"/>
</dbReference>
<dbReference type="PDB" id="7ABZ">
    <property type="method" value="EM"/>
    <property type="resolution" value="3.21 A"/>
    <property type="chains" value="B=2-272"/>
</dbReference>
<dbReference type="PDB" id="7AC7">
    <property type="method" value="EM"/>
    <property type="resolution" value="3.08 A"/>
    <property type="chains" value="B=2-272"/>
</dbReference>
<dbReference type="PDB" id="7ACJ">
    <property type="method" value="EM"/>
    <property type="resolution" value="3.20 A"/>
    <property type="chains" value="B=2-272"/>
</dbReference>
<dbReference type="PDB" id="7ACR">
    <property type="method" value="EM"/>
    <property type="resolution" value="3.44 A"/>
    <property type="chains" value="B=2-272"/>
</dbReference>
<dbReference type="PDB" id="7B5K">
    <property type="method" value="EM"/>
    <property type="resolution" value="2.90 A"/>
    <property type="chains" value="C=2-272"/>
</dbReference>
<dbReference type="PDB" id="7BL2">
    <property type="method" value="EM"/>
    <property type="resolution" value="3.70 A"/>
    <property type="chains" value="C=1-273"/>
</dbReference>
<dbReference type="PDB" id="7BL3">
    <property type="method" value="EM"/>
    <property type="resolution" value="3.50 A"/>
    <property type="chains" value="C=1-273"/>
</dbReference>
<dbReference type="PDB" id="7BL4">
    <property type="method" value="EM"/>
    <property type="resolution" value="2.40 A"/>
    <property type="chains" value="C=1-273"/>
</dbReference>
<dbReference type="PDB" id="7BL5">
    <property type="method" value="EM"/>
    <property type="resolution" value="3.30 A"/>
    <property type="chains" value="C=1-273"/>
</dbReference>
<dbReference type="PDB" id="7BL6">
    <property type="method" value="EM"/>
    <property type="resolution" value="4.00 A"/>
    <property type="chains" value="C=1-273"/>
</dbReference>
<dbReference type="PDB" id="7BV8">
    <property type="method" value="EM"/>
    <property type="resolution" value="3.14 A"/>
    <property type="chains" value="C=1-273"/>
</dbReference>
<dbReference type="PDB" id="7D6Z">
    <property type="method" value="EM"/>
    <property type="resolution" value="3.40 A"/>
    <property type="chains" value="C=1-273"/>
</dbReference>
<dbReference type="PDB" id="7D80">
    <property type="method" value="EM"/>
    <property type="resolution" value="4.10 A"/>
    <property type="chains" value="b=1-273"/>
</dbReference>
<dbReference type="PDB" id="7JSS">
    <property type="method" value="EM"/>
    <property type="resolution" value="3.70 A"/>
    <property type="chains" value="b=2-272"/>
</dbReference>
<dbReference type="PDB" id="7JSW">
    <property type="method" value="EM"/>
    <property type="resolution" value="3.80 A"/>
    <property type="chains" value="b=2-272"/>
</dbReference>
<dbReference type="PDB" id="7JSZ">
    <property type="method" value="EM"/>
    <property type="resolution" value="3.70 A"/>
    <property type="chains" value="b=2-272"/>
</dbReference>
<dbReference type="PDB" id="7JT1">
    <property type="method" value="EM"/>
    <property type="resolution" value="3.30 A"/>
    <property type="chains" value="b=2-272"/>
</dbReference>
<dbReference type="PDB" id="7JT2">
    <property type="method" value="EM"/>
    <property type="resolution" value="3.50 A"/>
    <property type="chains" value="b=2-272"/>
</dbReference>
<dbReference type="PDB" id="7JT3">
    <property type="method" value="EM"/>
    <property type="resolution" value="3.70 A"/>
    <property type="chains" value="b=2-272"/>
</dbReference>
<dbReference type="PDB" id="7K00">
    <property type="method" value="EM"/>
    <property type="resolution" value="1.98 A"/>
    <property type="chains" value="c=1-273"/>
</dbReference>
<dbReference type="PDB" id="7K50">
    <property type="method" value="EM"/>
    <property type="resolution" value="3.40 A"/>
    <property type="chains" value="b=2-272"/>
</dbReference>
<dbReference type="PDB" id="7K51">
    <property type="method" value="EM"/>
    <property type="resolution" value="3.50 A"/>
    <property type="chains" value="b=2-272"/>
</dbReference>
<dbReference type="PDB" id="7K52">
    <property type="method" value="EM"/>
    <property type="resolution" value="3.40 A"/>
    <property type="chains" value="b=2-272"/>
</dbReference>
<dbReference type="PDB" id="7K53">
    <property type="method" value="EM"/>
    <property type="resolution" value="3.20 A"/>
    <property type="chains" value="b=2-272"/>
</dbReference>
<dbReference type="PDB" id="7K54">
    <property type="method" value="EM"/>
    <property type="resolution" value="3.20 A"/>
    <property type="chains" value="b=2-272"/>
</dbReference>
<dbReference type="PDB" id="7K55">
    <property type="method" value="EM"/>
    <property type="resolution" value="3.30 A"/>
    <property type="chains" value="b=2-272"/>
</dbReference>
<dbReference type="PDB" id="7LV0">
    <property type="method" value="EM"/>
    <property type="resolution" value="3.20 A"/>
    <property type="chains" value="b=2-272"/>
</dbReference>
<dbReference type="PDB" id="7LVK">
    <property type="method" value="EM"/>
    <property type="resolution" value="2.20 A"/>
    <property type="chains" value="K=1-273"/>
</dbReference>
<dbReference type="PDB" id="7M5D">
    <property type="method" value="EM"/>
    <property type="resolution" value="2.80 A"/>
    <property type="chains" value="B=2-272"/>
</dbReference>
<dbReference type="PDB" id="7N1P">
    <property type="method" value="EM"/>
    <property type="resolution" value="2.33 A"/>
    <property type="chains" value="LB=1-273"/>
</dbReference>
<dbReference type="PDB" id="7N2C">
    <property type="method" value="EM"/>
    <property type="resolution" value="2.72 A"/>
    <property type="chains" value="LB=1-273"/>
</dbReference>
<dbReference type="PDB" id="7N2U">
    <property type="method" value="EM"/>
    <property type="resolution" value="2.53 A"/>
    <property type="chains" value="LB=1-273"/>
</dbReference>
<dbReference type="PDB" id="7N2V">
    <property type="method" value="EM"/>
    <property type="resolution" value="2.54 A"/>
    <property type="chains" value="LB=1-273"/>
</dbReference>
<dbReference type="PDB" id="7N30">
    <property type="method" value="EM"/>
    <property type="resolution" value="2.66 A"/>
    <property type="chains" value="LB=1-273"/>
</dbReference>
<dbReference type="PDB" id="7N31">
    <property type="method" value="EM"/>
    <property type="resolution" value="2.69 A"/>
    <property type="chains" value="LB=1-273"/>
</dbReference>
<dbReference type="PDB" id="7NBU">
    <property type="method" value="EM"/>
    <property type="resolution" value="3.11 A"/>
    <property type="chains" value="c=2-272"/>
</dbReference>
<dbReference type="PDB" id="7NSO">
    <property type="method" value="EM"/>
    <property type="resolution" value="2.90 A"/>
    <property type="chains" value="C=2-272"/>
</dbReference>
<dbReference type="PDB" id="7NSP">
    <property type="method" value="EM"/>
    <property type="resolution" value="3.50 A"/>
    <property type="chains" value="C=2-272"/>
</dbReference>
<dbReference type="PDB" id="7NSQ">
    <property type="method" value="EM"/>
    <property type="resolution" value="3.10 A"/>
    <property type="chains" value="C=2-272"/>
</dbReference>
<dbReference type="PDB" id="7NWT">
    <property type="method" value="EM"/>
    <property type="resolution" value="2.66 A"/>
    <property type="chains" value="B=1-273"/>
</dbReference>
<dbReference type="PDB" id="7NWW">
    <property type="method" value="EM"/>
    <property type="resolution" value="3.05 A"/>
    <property type="chains" value="C=2-272"/>
</dbReference>
<dbReference type="PDB" id="7O19">
    <property type="method" value="EM"/>
    <property type="resolution" value="2.90 A"/>
    <property type="chains" value="BC=1-273"/>
</dbReference>
<dbReference type="PDB" id="7O1A">
    <property type="method" value="EM"/>
    <property type="resolution" value="2.40 A"/>
    <property type="chains" value="BC=1-273"/>
</dbReference>
<dbReference type="PDB" id="7O1C">
    <property type="method" value="EM"/>
    <property type="resolution" value="2.60 A"/>
    <property type="chains" value="BC=1-273"/>
</dbReference>
<dbReference type="PDB" id="7ODE">
    <property type="method" value="EM"/>
    <property type="resolution" value="2.84 A"/>
    <property type="chains" value="K=1-273"/>
</dbReference>
<dbReference type="PDB" id="7OIF">
    <property type="method" value="EM"/>
    <property type="resolution" value="3.00 A"/>
    <property type="chains" value="C=2-272"/>
</dbReference>
<dbReference type="PDB" id="7OIG">
    <property type="method" value="EM"/>
    <property type="resolution" value="3.20 A"/>
    <property type="chains" value="C=2-272"/>
</dbReference>
<dbReference type="PDB" id="7OII">
    <property type="method" value="EM"/>
    <property type="resolution" value="3.00 A"/>
    <property type="chains" value="C=2-272"/>
</dbReference>
<dbReference type="PDB" id="7OIZ">
    <property type="method" value="EM"/>
    <property type="resolution" value="2.90 A"/>
    <property type="chains" value="c=1-273"/>
</dbReference>
<dbReference type="PDB" id="7OJ0">
    <property type="method" value="EM"/>
    <property type="resolution" value="3.50 A"/>
    <property type="chains" value="c=1-273"/>
</dbReference>
<dbReference type="PDB" id="7OT5">
    <property type="method" value="EM"/>
    <property type="resolution" value="2.90 A"/>
    <property type="chains" value="C=2-272"/>
</dbReference>
<dbReference type="PDB" id="7P3K">
    <property type="method" value="EM"/>
    <property type="resolution" value="2.90 A"/>
    <property type="chains" value="c=1-273"/>
</dbReference>
<dbReference type="PDB" id="7PJS">
    <property type="method" value="EM"/>
    <property type="resolution" value="2.35 A"/>
    <property type="chains" value="C=1-273"/>
</dbReference>
<dbReference type="PDB" id="7PJT">
    <property type="method" value="EM"/>
    <property type="resolution" value="6.00 A"/>
    <property type="chains" value="C=1-273"/>
</dbReference>
<dbReference type="PDB" id="7PJU">
    <property type="method" value="EM"/>
    <property type="resolution" value="9.50 A"/>
    <property type="chains" value="C=1-273"/>
</dbReference>
<dbReference type="PDB" id="7PJV">
    <property type="method" value="EM"/>
    <property type="resolution" value="3.10 A"/>
    <property type="chains" value="C=1-273"/>
</dbReference>
<dbReference type="PDB" id="7PJW">
    <property type="method" value="EM"/>
    <property type="resolution" value="4.00 A"/>
    <property type="chains" value="C=1-273"/>
</dbReference>
<dbReference type="PDB" id="7PJX">
    <property type="method" value="EM"/>
    <property type="resolution" value="6.50 A"/>
    <property type="chains" value="C=1-273"/>
</dbReference>
<dbReference type="PDB" id="7PJY">
    <property type="method" value="EM"/>
    <property type="resolution" value="3.10 A"/>
    <property type="chains" value="C=1-273"/>
</dbReference>
<dbReference type="PDB" id="7PJZ">
    <property type="method" value="EM"/>
    <property type="resolution" value="6.00 A"/>
    <property type="chains" value="C=1-273"/>
</dbReference>
<dbReference type="PDB" id="7Q4K">
    <property type="method" value="EM"/>
    <property type="resolution" value="3.00 A"/>
    <property type="chains" value="BC=1-273"/>
</dbReference>
<dbReference type="PDB" id="7QG8">
    <property type="method" value="EM"/>
    <property type="resolution" value="3.97 A"/>
    <property type="chains" value="P=1-273"/>
</dbReference>
<dbReference type="PDB" id="7QGN">
    <property type="method" value="EM"/>
    <property type="resolution" value="3.37 A"/>
    <property type="chains" value="P=1-273"/>
</dbReference>
<dbReference type="PDB" id="7QGR">
    <property type="method" value="EM"/>
    <property type="resolution" value="5.70 A"/>
    <property type="chains" value="P=1-273"/>
</dbReference>
<dbReference type="PDB" id="7QQ3">
    <property type="method" value="EM"/>
    <property type="resolution" value="2.10 A"/>
    <property type="chains" value="K=1-273"/>
</dbReference>
<dbReference type="PDB" id="7S1G">
    <property type="method" value="EM"/>
    <property type="resolution" value="2.48 A"/>
    <property type="chains" value="K=1-273"/>
</dbReference>
<dbReference type="PDB" id="7S1H">
    <property type="method" value="EM"/>
    <property type="resolution" value="2.35 A"/>
    <property type="chains" value="K=1-273"/>
</dbReference>
<dbReference type="PDB" id="7S1I">
    <property type="method" value="EM"/>
    <property type="resolution" value="2.48 A"/>
    <property type="chains" value="K=1-273"/>
</dbReference>
<dbReference type="PDB" id="7S1J">
    <property type="method" value="EM"/>
    <property type="resolution" value="2.47 A"/>
    <property type="chains" value="K=1-273"/>
</dbReference>
<dbReference type="PDB" id="7S1K">
    <property type="method" value="EM"/>
    <property type="resolution" value="2.42 A"/>
    <property type="chains" value="K=1-273"/>
</dbReference>
<dbReference type="PDB" id="7SA4">
    <property type="method" value="EM"/>
    <property type="resolution" value="2.55 A"/>
    <property type="chains" value="B=1-273"/>
</dbReference>
<dbReference type="PDB" id="7SS9">
    <property type="method" value="EM"/>
    <property type="resolution" value="3.90 A"/>
    <property type="chains" value="b=2-272"/>
</dbReference>
<dbReference type="PDB" id="7SSD">
    <property type="method" value="EM"/>
    <property type="resolution" value="3.30 A"/>
    <property type="chains" value="b=2-272"/>
</dbReference>
<dbReference type="PDB" id="7SSL">
    <property type="method" value="EM"/>
    <property type="resolution" value="3.80 A"/>
    <property type="chains" value="b=2-272"/>
</dbReference>
<dbReference type="PDB" id="7SSN">
    <property type="method" value="EM"/>
    <property type="resolution" value="3.20 A"/>
    <property type="chains" value="b=2-272"/>
</dbReference>
<dbReference type="PDB" id="7SSO">
    <property type="method" value="EM"/>
    <property type="resolution" value="3.20 A"/>
    <property type="chains" value="b=2-272"/>
</dbReference>
<dbReference type="PDB" id="7SSW">
    <property type="method" value="EM"/>
    <property type="resolution" value="3.80 A"/>
    <property type="chains" value="b=2-272"/>
</dbReference>
<dbReference type="PDB" id="7ST2">
    <property type="method" value="EM"/>
    <property type="resolution" value="2.90 A"/>
    <property type="chains" value="b=2-272"/>
</dbReference>
<dbReference type="PDB" id="7ST6">
    <property type="method" value="EM"/>
    <property type="resolution" value="3.00 A"/>
    <property type="chains" value="b=2-272"/>
</dbReference>
<dbReference type="PDB" id="7ST7">
    <property type="method" value="EM"/>
    <property type="resolution" value="3.20 A"/>
    <property type="chains" value="b=2-272"/>
</dbReference>
<dbReference type="PDB" id="7TOS">
    <property type="method" value="EM"/>
    <property type="resolution" value="2.90 A"/>
    <property type="chains" value="L02=2-272"/>
</dbReference>
<dbReference type="PDB" id="7UG7">
    <property type="method" value="EM"/>
    <property type="resolution" value="2.58 A"/>
    <property type="chains" value="LB=1-273"/>
</dbReference>
<dbReference type="PDB" id="7UPH">
    <property type="method" value="EM"/>
    <property type="resolution" value="4.18 A"/>
    <property type="chains" value="K=2-272"/>
</dbReference>
<dbReference type="PDB" id="7Y7C">
    <property type="method" value="EM"/>
    <property type="resolution" value="2.51 A"/>
    <property type="chains" value="c=1-273"/>
</dbReference>
<dbReference type="PDB" id="7Y7D">
    <property type="method" value="EM"/>
    <property type="resolution" value="2.58 A"/>
    <property type="chains" value="c=1-273"/>
</dbReference>
<dbReference type="PDB" id="7Y7E">
    <property type="method" value="EM"/>
    <property type="resolution" value="2.41 A"/>
    <property type="chains" value="c=1-273"/>
</dbReference>
<dbReference type="PDB" id="7Y7F">
    <property type="method" value="EM"/>
    <property type="resolution" value="2.43 A"/>
    <property type="chains" value="c=1-273"/>
</dbReference>
<dbReference type="PDB" id="7Y7G">
    <property type="method" value="EM"/>
    <property type="resolution" value="2.34 A"/>
    <property type="chains" value="c=1-273"/>
</dbReference>
<dbReference type="PDB" id="7Y7H">
    <property type="method" value="EM"/>
    <property type="resolution" value="2.51 A"/>
    <property type="chains" value="c=1-273"/>
</dbReference>
<dbReference type="PDB" id="7Z20">
    <property type="method" value="EM"/>
    <property type="resolution" value="2.29 A"/>
    <property type="chains" value="c=1-273"/>
</dbReference>
<dbReference type="PDB" id="7ZOD">
    <property type="method" value="EM"/>
    <property type="resolution" value="2.56 A"/>
    <property type="chains" value="c=1-273"/>
</dbReference>
<dbReference type="PDB" id="7ZP8">
    <property type="method" value="EM"/>
    <property type="resolution" value="2.20 A"/>
    <property type="chains" value="c=1-273"/>
</dbReference>
<dbReference type="PDB" id="7ZQ5">
    <property type="method" value="EM"/>
    <property type="resolution" value="2.70 A"/>
    <property type="chains" value="c=1-273"/>
</dbReference>
<dbReference type="PDB" id="7ZQ6">
    <property type="method" value="EM"/>
    <property type="resolution" value="2.75 A"/>
    <property type="chains" value="c=1-273"/>
</dbReference>
<dbReference type="PDB" id="7ZTA">
    <property type="method" value="EM"/>
    <property type="resolution" value="2.70 A"/>
    <property type="chains" value="L021=2-272"/>
</dbReference>
<dbReference type="PDB" id="8A3L">
    <property type="method" value="EM"/>
    <property type="resolution" value="3.42 A"/>
    <property type="chains" value="c=1-273"/>
</dbReference>
<dbReference type="PDB" id="8AKN">
    <property type="method" value="EM"/>
    <property type="resolution" value="2.30 A"/>
    <property type="chains" value="c=1-273"/>
</dbReference>
<dbReference type="PDB" id="8AM9">
    <property type="method" value="EM"/>
    <property type="resolution" value="2.80 A"/>
    <property type="chains" value="c=1-273"/>
</dbReference>
<dbReference type="PDB" id="8ANA">
    <property type="method" value="EM"/>
    <property type="resolution" value="2.10 A"/>
    <property type="chains" value="c=1-273"/>
</dbReference>
<dbReference type="PDB" id="8AP4">
    <property type="method" value="EM"/>
    <property type="resolution" value="3.00 A"/>
    <property type="chains" value="c=1-273"/>
</dbReference>
<dbReference type="PDB" id="8AYE">
    <property type="method" value="EM"/>
    <property type="resolution" value="1.96 A"/>
    <property type="chains" value="c=1-273"/>
</dbReference>
<dbReference type="PDB" id="8B0X">
    <property type="method" value="EM"/>
    <property type="resolution" value="1.55 A"/>
    <property type="chains" value="c=1-273"/>
</dbReference>
<dbReference type="PDB" id="8B7Y">
    <property type="method" value="EM"/>
    <property type="resolution" value="3.00 A"/>
    <property type="chains" value="K=1-273"/>
</dbReference>
<dbReference type="PDB" id="8BF7">
    <property type="method" value="EM"/>
    <property type="resolution" value="2.33 A"/>
    <property type="chains" value="A=1-273"/>
</dbReference>
<dbReference type="PDB" id="8BGE">
    <property type="method" value="EM"/>
    <property type="resolution" value="2.11 A"/>
    <property type="chains" value="A=1-273"/>
</dbReference>
<dbReference type="PDB" id="8BGH">
    <property type="method" value="EM"/>
    <property type="resolution" value="2.88 A"/>
    <property type="chains" value="A=1-273"/>
</dbReference>
<dbReference type="PDB" id="8BH4">
    <property type="method" value="EM"/>
    <property type="resolution" value="2.62 A"/>
    <property type="chains" value="A=1-273"/>
</dbReference>
<dbReference type="PDB" id="8BHJ">
    <property type="method" value="EM"/>
    <property type="resolution" value="2.81 A"/>
    <property type="chains" value="A=1-273"/>
</dbReference>
<dbReference type="PDB" id="8BHL">
    <property type="method" value="EM"/>
    <property type="resolution" value="2.21 A"/>
    <property type="chains" value="A=1-273"/>
</dbReference>
<dbReference type="PDB" id="8BHN">
    <property type="method" value="EM"/>
    <property type="resolution" value="2.85 A"/>
    <property type="chains" value="A=1-273"/>
</dbReference>
<dbReference type="PDB" id="8BHP">
    <property type="method" value="EM"/>
    <property type="resolution" value="2.37 A"/>
    <property type="chains" value="A=1-273"/>
</dbReference>
<dbReference type="PDB" id="8BIL">
    <property type="method" value="EM"/>
    <property type="resolution" value="2.04 A"/>
    <property type="chains" value="A=1-273"/>
</dbReference>
<dbReference type="PDB" id="8BIM">
    <property type="method" value="EM"/>
    <property type="resolution" value="2.04 A"/>
    <property type="chains" value="A=1-273"/>
</dbReference>
<dbReference type="PDB" id="8C8X">
    <property type="method" value="EM"/>
    <property type="resolution" value="3.93 A"/>
    <property type="chains" value="C=1-273"/>
</dbReference>
<dbReference type="PDB" id="8C8Y">
    <property type="method" value="EM"/>
    <property type="resolution" value="3.03 A"/>
    <property type="chains" value="C=1-273"/>
</dbReference>
<dbReference type="PDB" id="8C91">
    <property type="method" value="EM"/>
    <property type="resolution" value="4.19 A"/>
    <property type="chains" value="C=1-273"/>
</dbReference>
<dbReference type="PDB" id="8CAM">
    <property type="method" value="EM"/>
    <property type="resolution" value="1.86 A"/>
    <property type="chains" value="c=1-273"/>
</dbReference>
<dbReference type="PDB" id="8CEU">
    <property type="method" value="EM"/>
    <property type="resolution" value="1.83 A"/>
    <property type="chains" value="c=1-273"/>
</dbReference>
<dbReference type="PDB" id="8CGD">
    <property type="method" value="EM"/>
    <property type="resolution" value="1.98 A"/>
    <property type="chains" value="c=1-273"/>
</dbReference>
<dbReference type="PDB" id="8CGK">
    <property type="method" value="EM"/>
    <property type="resolution" value="1.64 A"/>
    <property type="chains" value="c=1-273"/>
</dbReference>
<dbReference type="PDB" id="8CGV">
    <property type="method" value="EM"/>
    <property type="resolution" value="1.66 A"/>
    <property type="chains" value="c=1-273"/>
</dbReference>
<dbReference type="PDB" id="8E30">
    <property type="method" value="EM"/>
    <property type="resolution" value="1.91 A"/>
    <property type="chains" value="K=2-272"/>
</dbReference>
<dbReference type="PDB" id="8E32">
    <property type="method" value="EM"/>
    <property type="resolution" value="2.35 A"/>
    <property type="chains" value="K=2-272"/>
</dbReference>
<dbReference type="PDB" id="8E33">
    <property type="method" value="EM"/>
    <property type="resolution" value="2.23 A"/>
    <property type="chains" value="K=2-272"/>
</dbReference>
<dbReference type="PDB" id="8E35">
    <property type="method" value="EM"/>
    <property type="resolution" value="2.27 A"/>
    <property type="chains" value="K=2-272"/>
</dbReference>
<dbReference type="PDB" id="8E36">
    <property type="method" value="EM"/>
    <property type="resolution" value="2.38 A"/>
    <property type="chains" value="K=2-272"/>
</dbReference>
<dbReference type="PDB" id="8E3L">
    <property type="method" value="EM"/>
    <property type="resolution" value="2.35 A"/>
    <property type="chains" value="K=2-272"/>
</dbReference>
<dbReference type="PDB" id="8E3M">
    <property type="method" value="EM"/>
    <property type="resolution" value="2.25 A"/>
    <property type="chains" value="K=2-272"/>
</dbReference>
<dbReference type="PDB" id="8E3O">
    <property type="method" value="EM"/>
    <property type="resolution" value="1.99 A"/>
    <property type="chains" value="K=2-272"/>
</dbReference>
<dbReference type="PDB" id="8E41">
    <property type="method" value="EM"/>
    <property type="resolution" value="2.13 A"/>
    <property type="chains" value="K=2-272"/>
</dbReference>
<dbReference type="PDB" id="8E42">
    <property type="method" value="EM"/>
    <property type="resolution" value="2.29 A"/>
    <property type="chains" value="K=2-272"/>
</dbReference>
<dbReference type="PDB" id="8E43">
    <property type="method" value="EM"/>
    <property type="resolution" value="2.09 A"/>
    <property type="chains" value="K=2-272"/>
</dbReference>
<dbReference type="PDB" id="8E44">
    <property type="method" value="EM"/>
    <property type="resolution" value="2.53 A"/>
    <property type="chains" value="K=2-272"/>
</dbReference>
<dbReference type="PDB" id="8E45">
    <property type="method" value="EM"/>
    <property type="resolution" value="2.30 A"/>
    <property type="chains" value="K=2-272"/>
</dbReference>
<dbReference type="PDB" id="8E46">
    <property type="method" value="EM"/>
    <property type="resolution" value="2.32 A"/>
    <property type="chains" value="K=2-272"/>
</dbReference>
<dbReference type="PDB" id="8E47">
    <property type="method" value="EM"/>
    <property type="resolution" value="2.32 A"/>
    <property type="chains" value="K=2-272"/>
</dbReference>
<dbReference type="PDB" id="8E48">
    <property type="method" value="EM"/>
    <property type="resolution" value="2.27 A"/>
    <property type="chains" value="K=2-272"/>
</dbReference>
<dbReference type="PDB" id="8E49">
    <property type="method" value="EM"/>
    <property type="resolution" value="2.05 A"/>
    <property type="chains" value="K=2-272"/>
</dbReference>
<dbReference type="PDB" id="8EIU">
    <property type="method" value="EM"/>
    <property type="resolution" value="2.24 A"/>
    <property type="chains" value="c=1-273"/>
</dbReference>
<dbReference type="PDB" id="8EKC">
    <property type="method" value="EM"/>
    <property type="resolution" value="2.70 A"/>
    <property type="chains" value="C=1-273"/>
</dbReference>
<dbReference type="PDB" id="8EMM">
    <property type="method" value="EM"/>
    <property type="resolution" value="2.10 A"/>
    <property type="chains" value="c=1-273"/>
</dbReference>
<dbReference type="PDB" id="8FIZ">
    <property type="method" value="EM"/>
    <property type="resolution" value="3.80 A"/>
    <property type="chains" value="BD=1-273"/>
</dbReference>
<dbReference type="PDB" id="8FTO">
    <property type="method" value="EM"/>
    <property type="resolution" value="1.85 A"/>
    <property type="chains" value="c=1-273"/>
</dbReference>
<dbReference type="PDB" id="8FZD">
    <property type="method" value="EM"/>
    <property type="resolution" value="3.10 A"/>
    <property type="chains" value="C=1-273"/>
</dbReference>
<dbReference type="PDB" id="8FZE">
    <property type="method" value="EM"/>
    <property type="resolution" value="3.00 A"/>
    <property type="chains" value="C=1-273"/>
</dbReference>
<dbReference type="PDB" id="8FZF">
    <property type="method" value="EM"/>
    <property type="resolution" value="3.20 A"/>
    <property type="chains" value="C=1-273"/>
</dbReference>
<dbReference type="PDB" id="8FZG">
    <property type="method" value="EM"/>
    <property type="resolution" value="3.10 A"/>
    <property type="chains" value="C=1-273"/>
</dbReference>
<dbReference type="PDB" id="8FZH">
    <property type="method" value="EM"/>
    <property type="resolution" value="2.90 A"/>
    <property type="chains" value="C=1-273"/>
</dbReference>
<dbReference type="PDB" id="8FZI">
    <property type="method" value="EM"/>
    <property type="resolution" value="3.10 A"/>
    <property type="chains" value="C=1-273"/>
</dbReference>
<dbReference type="PDB" id="8FZJ">
    <property type="method" value="EM"/>
    <property type="resolution" value="3.00 A"/>
    <property type="chains" value="C=1-273"/>
</dbReference>
<dbReference type="PDB" id="8G2U">
    <property type="method" value="EM"/>
    <property type="resolution" value="3.00 A"/>
    <property type="chains" value="C=2-273"/>
</dbReference>
<dbReference type="PDB" id="8G31">
    <property type="method" value="EM"/>
    <property type="resolution" value="3.20 A"/>
    <property type="chains" value="C=2-273"/>
</dbReference>
<dbReference type="PDB" id="8G34">
    <property type="method" value="EM"/>
    <property type="resolution" value="3.20 A"/>
    <property type="chains" value="C=2-273"/>
</dbReference>
<dbReference type="PDB" id="8G38">
    <property type="method" value="EM"/>
    <property type="resolution" value="3.20 A"/>
    <property type="chains" value="C=2-273"/>
</dbReference>
<dbReference type="PDB" id="8G6W">
    <property type="method" value="EM"/>
    <property type="resolution" value="2.02 A"/>
    <property type="chains" value="c=1-273"/>
</dbReference>
<dbReference type="PDB" id="8G6X">
    <property type="method" value="EM"/>
    <property type="resolution" value="2.31 A"/>
    <property type="chains" value="c=1-273"/>
</dbReference>
<dbReference type="PDB" id="8G6Y">
    <property type="method" value="EM"/>
    <property type="resolution" value="2.09 A"/>
    <property type="chains" value="c=1-273"/>
</dbReference>
<dbReference type="PDB" id="8G7P">
    <property type="method" value="EM"/>
    <property type="resolution" value="2.90 A"/>
    <property type="chains" value="C=1-273"/>
</dbReference>
<dbReference type="PDB" id="8G7Q">
    <property type="method" value="EM"/>
    <property type="resolution" value="3.10 A"/>
    <property type="chains" value="C=1-273"/>
</dbReference>
<dbReference type="PDB" id="8G7R">
    <property type="method" value="EM"/>
    <property type="resolution" value="2.80 A"/>
    <property type="chains" value="C=1-273"/>
</dbReference>
<dbReference type="PDB" id="8G7S">
    <property type="method" value="EM"/>
    <property type="resolution" value="3.10 A"/>
    <property type="chains" value="C=1-273"/>
</dbReference>
<dbReference type="PDB" id="8HSP">
    <property type="method" value="EM"/>
    <property type="resolution" value="2.32 A"/>
    <property type="chains" value="c=1-273"/>
</dbReference>
<dbReference type="PDB" id="8HTZ">
    <property type="method" value="EM"/>
    <property type="resolution" value="2.40 A"/>
    <property type="chains" value="c=1-273"/>
</dbReference>
<dbReference type="PDB" id="8HU1">
    <property type="method" value="EM"/>
    <property type="resolution" value="2.69 A"/>
    <property type="chains" value="c=1-273"/>
</dbReference>
<dbReference type="PDB" id="8IFB">
    <property type="method" value="EM"/>
    <property type="resolution" value="2.43 A"/>
    <property type="chains" value="c=1-273"/>
</dbReference>
<dbReference type="PDB" id="8IFC">
    <property type="method" value="EM"/>
    <property type="resolution" value="2.90 A"/>
    <property type="chains" value="c=1-273"/>
</dbReference>
<dbReference type="PDB" id="8J1Z">
    <property type="method" value="EM"/>
    <property type="resolution" value="2.60 A"/>
    <property type="chains" value="c=1-273"/>
</dbReference>
<dbReference type="PDB" id="8P16">
    <property type="method" value="EM"/>
    <property type="resolution" value="2.77 A"/>
    <property type="chains" value="B=1-273"/>
</dbReference>
<dbReference type="PDB" id="8P17">
    <property type="method" value="EM"/>
    <property type="resolution" value="2.78 A"/>
    <property type="chains" value="B=1-273"/>
</dbReference>
<dbReference type="PDB" id="8P18">
    <property type="method" value="EM"/>
    <property type="resolution" value="2.77 A"/>
    <property type="chains" value="B=1-273"/>
</dbReference>
<dbReference type="PDB" id="8PEG">
    <property type="method" value="EM"/>
    <property type="resolution" value="3.30 A"/>
    <property type="chains" value="b=1-273"/>
</dbReference>
<dbReference type="PDB" id="8PHJ">
    <property type="method" value="EM"/>
    <property type="resolution" value="3.67 A"/>
    <property type="chains" value="c=1-273"/>
</dbReference>
<dbReference type="PDB" id="8PKL">
    <property type="method" value="EM"/>
    <property type="resolution" value="3.09 A"/>
    <property type="chains" value="b=1-273"/>
</dbReference>
<dbReference type="PDB" id="8PVA">
    <property type="method" value="EM"/>
    <property type="resolution" value="4.50 A"/>
    <property type="chains" value="c=1-273"/>
</dbReference>
<dbReference type="PDB" id="8Q4F">
    <property type="method" value="EM"/>
    <property type="resolution" value="3.10 A"/>
    <property type="chains" value="c=1-273"/>
</dbReference>
<dbReference type="PDB" id="8QBT">
    <property type="method" value="EM"/>
    <property type="resolution" value="2.20 A"/>
    <property type="chains" value="C=1-273"/>
</dbReference>
<dbReference type="PDB" id="8QK7">
    <property type="method" value="EM"/>
    <property type="resolution" value="2.77 A"/>
    <property type="chains" value="B=1-273"/>
</dbReference>
<dbReference type="PDB" id="8QOA">
    <property type="method" value="EM"/>
    <property type="resolution" value="2.00 A"/>
    <property type="chains" value="c=1-273"/>
</dbReference>
<dbReference type="PDB" id="8R3V">
    <property type="method" value="EM"/>
    <property type="resolution" value="3.28 A"/>
    <property type="chains" value="b2=1-273"/>
</dbReference>
<dbReference type="PDB" id="8R6C">
    <property type="method" value="EM"/>
    <property type="resolution" value="2.20 A"/>
    <property type="chains" value="c=1-273"/>
</dbReference>
<dbReference type="PDB" id="8R8M">
    <property type="method" value="EM"/>
    <property type="resolution" value="2.40 A"/>
    <property type="chains" value="c=1-273"/>
</dbReference>
<dbReference type="PDB" id="8RCL">
    <property type="method" value="EM"/>
    <property type="resolution" value="3.49 A"/>
    <property type="chains" value="b2=1-273"/>
</dbReference>
<dbReference type="PDB" id="8RCM">
    <property type="method" value="EM"/>
    <property type="resolution" value="3.59 A"/>
    <property type="chains" value="b2=1-273"/>
</dbReference>
<dbReference type="PDB" id="8RCS">
    <property type="method" value="EM"/>
    <property type="resolution" value="4.46 A"/>
    <property type="chains" value="b2=1-273"/>
</dbReference>
<dbReference type="PDB" id="8RCT">
    <property type="method" value="EM"/>
    <property type="resolution" value="5.32 A"/>
    <property type="chains" value="b2=1-273"/>
</dbReference>
<dbReference type="PDB" id="8RPY">
    <property type="method" value="EM"/>
    <property type="resolution" value="2.64 A"/>
    <property type="chains" value="C=2-272"/>
</dbReference>
<dbReference type="PDB" id="8RPZ">
    <property type="method" value="EM"/>
    <property type="resolution" value="2.44 A"/>
    <property type="chains" value="C=2-272"/>
</dbReference>
<dbReference type="PDB" id="8RQ0">
    <property type="method" value="EM"/>
    <property type="resolution" value="2.44 A"/>
    <property type="chains" value="C=2-272"/>
</dbReference>
<dbReference type="PDB" id="8RQ2">
    <property type="method" value="EM"/>
    <property type="resolution" value="2.44 A"/>
    <property type="chains" value="C=2-272"/>
</dbReference>
<dbReference type="PDB" id="8SYL">
    <property type="method" value="EM"/>
    <property type="resolution" value="2.90 A"/>
    <property type="chains" value="C=1-273"/>
</dbReference>
<dbReference type="PDB" id="8T5D">
    <property type="method" value="EM"/>
    <property type="resolution" value="3.20 A"/>
    <property type="chains" value="C=2-273"/>
</dbReference>
<dbReference type="PDB" id="8T5H">
    <property type="method" value="EM"/>
    <property type="resolution" value="3.30 A"/>
    <property type="chains" value="C=2-273"/>
</dbReference>
<dbReference type="PDB" id="8UPO">
    <property type="method" value="EM"/>
    <property type="resolution" value="5.50 A"/>
    <property type="chains" value="h=1-273"/>
</dbReference>
<dbReference type="PDB" id="8UPR">
    <property type="method" value="EM"/>
    <property type="resolution" value="5.30 A"/>
    <property type="chains" value="h=1-273"/>
</dbReference>
<dbReference type="PDB" id="8UQL">
    <property type="method" value="EM"/>
    <property type="resolution" value="3.20 A"/>
    <property type="chains" value="h=1-273"/>
</dbReference>
<dbReference type="PDB" id="8UQM">
    <property type="method" value="EM"/>
    <property type="resolution" value="5.30 A"/>
    <property type="chains" value="h=1-273"/>
</dbReference>
<dbReference type="PDB" id="8UQP">
    <property type="method" value="EM"/>
    <property type="resolution" value="3.80 A"/>
    <property type="chains" value="h=1-273"/>
</dbReference>
<dbReference type="PDB" id="8UR0">
    <property type="method" value="EM"/>
    <property type="resolution" value="3.40 A"/>
    <property type="chains" value="h=1-273"/>
</dbReference>
<dbReference type="PDB" id="8URH">
    <property type="method" value="EM"/>
    <property type="resolution" value="5.70 A"/>
    <property type="chains" value="h=1-273"/>
</dbReference>
<dbReference type="PDB" id="8URI">
    <property type="method" value="EM"/>
    <property type="resolution" value="5.30 A"/>
    <property type="chains" value="h=1-273"/>
</dbReference>
<dbReference type="PDB" id="8URX">
    <property type="method" value="EM"/>
    <property type="resolution" value="6.60 A"/>
    <property type="chains" value="h=1-273"/>
</dbReference>
<dbReference type="PDB" id="8URY">
    <property type="method" value="EM"/>
    <property type="resolution" value="3.10 A"/>
    <property type="chains" value="h=1-273"/>
</dbReference>
<dbReference type="PDB" id="8VS9">
    <property type="method" value="EM"/>
    <property type="resolution" value="3.90 A"/>
    <property type="chains" value="L02=1-273"/>
</dbReference>
<dbReference type="PDB" id="8VSA">
    <property type="method" value="EM"/>
    <property type="resolution" value="3.70 A"/>
    <property type="chains" value="L02=1-273"/>
</dbReference>
<dbReference type="PDB" id="8W51">
    <property type="method" value="EM"/>
    <property type="resolution" value="2.40 A"/>
    <property type="chains" value="C=1-273"/>
</dbReference>
<dbReference type="PDB" id="8YUO">
    <property type="method" value="EM"/>
    <property type="resolution" value="2.25 A"/>
    <property type="chains" value="c=1-273"/>
</dbReference>
<dbReference type="PDB" id="8YUP">
    <property type="method" value="EM"/>
    <property type="resolution" value="2.39 A"/>
    <property type="chains" value="c=1-273"/>
</dbReference>
<dbReference type="PDB" id="8YUQ">
    <property type="method" value="EM"/>
    <property type="resolution" value="2.41 A"/>
    <property type="chains" value="c=1-273"/>
</dbReference>
<dbReference type="PDB" id="8YUR">
    <property type="method" value="EM"/>
    <property type="resolution" value="2.47 A"/>
    <property type="chains" value="c=1-273"/>
</dbReference>
<dbReference type="PDB" id="8YUS">
    <property type="method" value="EM"/>
    <property type="resolution" value="2.43 A"/>
    <property type="chains" value="c=1-273"/>
</dbReference>
<dbReference type="PDB" id="9AX7">
    <property type="method" value="EM"/>
    <property type="resolution" value="2.63 A"/>
    <property type="chains" value="c=1-273"/>
</dbReference>
<dbReference type="PDB" id="9AX8">
    <property type="method" value="EM"/>
    <property type="resolution" value="2.60 A"/>
    <property type="chains" value="9=2-272"/>
</dbReference>
<dbReference type="PDB" id="9CG5">
    <property type="method" value="EM"/>
    <property type="resolution" value="2.59 A"/>
    <property type="chains" value="c=1-273"/>
</dbReference>
<dbReference type="PDB" id="9CG6">
    <property type="method" value="EM"/>
    <property type="resolution" value="2.61 A"/>
    <property type="chains" value="c=1-273"/>
</dbReference>
<dbReference type="PDB" id="9CG7">
    <property type="method" value="EM"/>
    <property type="resolution" value="2.75 A"/>
    <property type="chains" value="c=1-273"/>
</dbReference>
<dbReference type="PDB" id="9D89">
    <property type="method" value="EM"/>
    <property type="resolution" value="1.95 A"/>
    <property type="chains" value="F=1-273"/>
</dbReference>
<dbReference type="PDB" id="9FBV">
    <property type="method" value="EM"/>
    <property type="resolution" value="2.40 A"/>
    <property type="chains" value="c=1-273"/>
</dbReference>
<dbReference type="PDB" id="9GFT">
    <property type="method" value="EM"/>
    <property type="resolution" value="3.10 A"/>
    <property type="chains" value="AX/P=1-273"/>
</dbReference>
<dbReference type="PDB" id="9GGR">
    <property type="method" value="EM"/>
    <property type="resolution" value="3.20 A"/>
    <property type="chains" value="AX/P=1-273"/>
</dbReference>
<dbReference type="PDB" id="9GR1">
    <property type="method" value="EM"/>
    <property type="resolution" value="3.17 A"/>
    <property type="chains" value="c=1-273"/>
</dbReference>
<dbReference type="PDB" id="9H3T">
    <property type="method" value="EM"/>
    <property type="resolution" value="3.85 A"/>
    <property type="chains" value="C=2-272"/>
</dbReference>
<dbReference type="PDB" id="9H3U">
    <property type="method" value="EM"/>
    <property type="resolution" value="3.47 A"/>
    <property type="chains" value="C=2-272"/>
</dbReference>
<dbReference type="PDB" id="9H3V">
    <property type="method" value="EM"/>
    <property type="resolution" value="3.55 A"/>
    <property type="chains" value="C=2-272"/>
</dbReference>
<dbReference type="PDB" id="9H3W">
    <property type="method" value="EM"/>
    <property type="resolution" value="5.38 A"/>
    <property type="chains" value="C=2-272"/>
</dbReference>
<dbReference type="PDB" id="9H3X">
    <property type="method" value="EM"/>
    <property type="resolution" value="4.12 A"/>
    <property type="chains" value="C=2-272"/>
</dbReference>
<dbReference type="PDB" id="9H3Y">
    <property type="method" value="EM"/>
    <property type="resolution" value="3.09 A"/>
    <property type="chains" value="C=2-272"/>
</dbReference>
<dbReference type="PDB" id="9H3Z">
    <property type="method" value="EM"/>
    <property type="resolution" value="2.98 A"/>
    <property type="chains" value="C=2-272"/>
</dbReference>
<dbReference type="PDB" id="9HA5">
    <property type="method" value="EM"/>
    <property type="resolution" value="3.30 A"/>
    <property type="chains" value="C=2-272"/>
</dbReference>
<dbReference type="PDB" id="9HA6">
    <property type="method" value="EM"/>
    <property type="resolution" value="3.08 A"/>
    <property type="chains" value="C=2-272"/>
</dbReference>
<dbReference type="PDB" id="9MOR">
    <property type="method" value="EM"/>
    <property type="resolution" value="2.65 A"/>
    <property type="chains" value="B=1-273"/>
</dbReference>
<dbReference type="PDB" id="9MQ4">
    <property type="method" value="EM"/>
    <property type="resolution" value="2.78 A"/>
    <property type="chains" value="B=1-273"/>
</dbReference>
<dbReference type="PDBsum" id="2J28"/>
<dbReference type="PDBsum" id="2RDO"/>
<dbReference type="PDBsum" id="3BBX"/>
<dbReference type="PDBsum" id="3J5L"/>
<dbReference type="PDBsum" id="3J7Z"/>
<dbReference type="PDBsum" id="3J8G"/>
<dbReference type="PDBsum" id="3J9Y"/>
<dbReference type="PDBsum" id="3J9Z"/>
<dbReference type="PDBsum" id="3JA1"/>
<dbReference type="PDBsum" id="3JBU"/>
<dbReference type="PDBsum" id="3JBV"/>
<dbReference type="PDBsum" id="3JCD"/>
<dbReference type="PDBsum" id="3JCE"/>
<dbReference type="PDBsum" id="3JCJ"/>
<dbReference type="PDBsum" id="3JCN"/>
<dbReference type="PDBsum" id="487D"/>
<dbReference type="PDBsum" id="4CSU"/>
<dbReference type="PDBsum" id="4U1U"/>
<dbReference type="PDBsum" id="4U1V"/>
<dbReference type="PDBsum" id="4U20"/>
<dbReference type="PDBsum" id="4U24"/>
<dbReference type="PDBsum" id="4U25"/>
<dbReference type="PDBsum" id="4U26"/>
<dbReference type="PDBsum" id="4U27"/>
<dbReference type="PDBsum" id="4UY8"/>
<dbReference type="PDBsum" id="4V47"/>
<dbReference type="PDBsum" id="4V48"/>
<dbReference type="PDBsum" id="4V4H"/>
<dbReference type="PDBsum" id="4V4Q"/>
<dbReference type="PDBsum" id="4V4V"/>
<dbReference type="PDBsum" id="4V4W"/>
<dbReference type="PDBsum" id="4V50"/>
<dbReference type="PDBsum" id="4V52"/>
<dbReference type="PDBsum" id="4V53"/>
<dbReference type="PDBsum" id="4V54"/>
<dbReference type="PDBsum" id="4V55"/>
<dbReference type="PDBsum" id="4V56"/>
<dbReference type="PDBsum" id="4V57"/>
<dbReference type="PDBsum" id="4V5B"/>
<dbReference type="PDBsum" id="4V5H"/>
<dbReference type="PDBsum" id="4V5Y"/>
<dbReference type="PDBsum" id="4V64"/>
<dbReference type="PDBsum" id="4V65"/>
<dbReference type="PDBsum" id="4V66"/>
<dbReference type="PDBsum" id="4V69"/>
<dbReference type="PDBsum" id="4V6C"/>
<dbReference type="PDBsum" id="4V6D"/>
<dbReference type="PDBsum" id="4V6E"/>
<dbReference type="PDBsum" id="4V6K"/>
<dbReference type="PDBsum" id="4V6L"/>
<dbReference type="PDBsum" id="4V6M"/>
<dbReference type="PDBsum" id="4V6N"/>
<dbReference type="PDBsum" id="4V6O"/>
<dbReference type="PDBsum" id="4V6P"/>
<dbReference type="PDBsum" id="4V6Q"/>
<dbReference type="PDBsum" id="4V6R"/>
<dbReference type="PDBsum" id="4V6S"/>
<dbReference type="PDBsum" id="4V6T"/>
<dbReference type="PDBsum" id="4V6V"/>
<dbReference type="PDBsum" id="4V6Y"/>
<dbReference type="PDBsum" id="4V6Z"/>
<dbReference type="PDBsum" id="4V70"/>
<dbReference type="PDBsum" id="4V71"/>
<dbReference type="PDBsum" id="4V72"/>
<dbReference type="PDBsum" id="4V73"/>
<dbReference type="PDBsum" id="4V74"/>
<dbReference type="PDBsum" id="4V75"/>
<dbReference type="PDBsum" id="4V76"/>
<dbReference type="PDBsum" id="4V77"/>
<dbReference type="PDBsum" id="4V78"/>
<dbReference type="PDBsum" id="4V79"/>
<dbReference type="PDBsum" id="4V7A"/>
<dbReference type="PDBsum" id="4V7B"/>
<dbReference type="PDBsum" id="4V7C"/>
<dbReference type="PDBsum" id="4V7D"/>
<dbReference type="PDBsum" id="4V7I"/>
<dbReference type="PDBsum" id="4V7S"/>
<dbReference type="PDBsum" id="4V7T"/>
<dbReference type="PDBsum" id="4V7U"/>
<dbReference type="PDBsum" id="4V7V"/>
<dbReference type="PDBsum" id="4V85"/>
<dbReference type="PDBsum" id="4V89"/>
<dbReference type="PDBsum" id="4V9C"/>
<dbReference type="PDBsum" id="4V9D"/>
<dbReference type="PDBsum" id="4V9O"/>
<dbReference type="PDBsum" id="4V9P"/>
<dbReference type="PDBsum" id="4WF1"/>
<dbReference type="PDBsum" id="4WOI"/>
<dbReference type="PDBsum" id="4WWW"/>
<dbReference type="PDBsum" id="4YBB"/>
<dbReference type="PDBsum" id="5ADY"/>
<dbReference type="PDBsum" id="5AFI"/>
<dbReference type="PDBsum" id="5AKA"/>
<dbReference type="PDBsum" id="5GAD"/>
<dbReference type="PDBsum" id="5GAE"/>
<dbReference type="PDBsum" id="5GAF"/>
<dbReference type="PDBsum" id="5GAG"/>
<dbReference type="PDBsum" id="5GAH"/>
<dbReference type="PDBsum" id="5H5U"/>
<dbReference type="PDBsum" id="5IQR"/>
<dbReference type="PDBsum" id="5IT8"/>
<dbReference type="PDBsum" id="5J5B"/>
<dbReference type="PDBsum" id="5J7L"/>
<dbReference type="PDBsum" id="5J88"/>
<dbReference type="PDBsum" id="5J8A"/>
<dbReference type="PDBsum" id="5J91"/>
<dbReference type="PDBsum" id="5JC9"/>
<dbReference type="PDBsum" id="5JTE"/>
<dbReference type="PDBsum" id="5JU8"/>
<dbReference type="PDBsum" id="5KCR"/>
<dbReference type="PDBsum" id="5KCS"/>
<dbReference type="PDBsum" id="5KPS"/>
<dbReference type="PDBsum" id="5KPV"/>
<dbReference type="PDBsum" id="5KPW"/>
<dbReference type="PDBsum" id="5KPX"/>
<dbReference type="PDBsum" id="5L3P"/>
<dbReference type="PDBsum" id="5LZA"/>
<dbReference type="PDBsum" id="5LZB"/>
<dbReference type="PDBsum" id="5LZC"/>
<dbReference type="PDBsum" id="5LZD"/>
<dbReference type="PDBsum" id="5LZE"/>
<dbReference type="PDBsum" id="5LZF"/>
<dbReference type="PDBsum" id="5MDV"/>
<dbReference type="PDBsum" id="5MDW"/>
<dbReference type="PDBsum" id="5MDY"/>
<dbReference type="PDBsum" id="5MDZ"/>
<dbReference type="PDBsum" id="5MGP"/>
<dbReference type="PDBsum" id="5NCO"/>
<dbReference type="PDBsum" id="5NP6"/>
<dbReference type="PDBsum" id="5NWY"/>
<dbReference type="PDBsum" id="5O2R"/>
<dbReference type="PDBsum" id="5U4I"/>
<dbReference type="PDBsum" id="5U9F"/>
<dbReference type="PDBsum" id="5U9G"/>
<dbReference type="PDBsum" id="5UYK"/>
<dbReference type="PDBsum" id="5UYL"/>
<dbReference type="PDBsum" id="5UYM"/>
<dbReference type="PDBsum" id="5UYN"/>
<dbReference type="PDBsum" id="5UYP"/>
<dbReference type="PDBsum" id="5UYQ"/>
<dbReference type="PDBsum" id="5WDT"/>
<dbReference type="PDBsum" id="5WE4"/>
<dbReference type="PDBsum" id="5WE6"/>
<dbReference type="PDBsum" id="5WF0"/>
<dbReference type="PDBsum" id="5WFK"/>
<dbReference type="PDBsum" id="5WFS"/>
<dbReference type="PDBsum" id="6BU8"/>
<dbReference type="PDBsum" id="6BY1"/>
<dbReference type="PDBsum" id="6C4H"/>
<dbReference type="PDBsum" id="6C4I"/>
<dbReference type="PDBsum" id="6DNC"/>
<dbReference type="PDBsum" id="6ENF"/>
<dbReference type="PDBsum" id="6ENJ"/>
<dbReference type="PDBsum" id="6ENU"/>
<dbReference type="PDBsum" id="6GBZ"/>
<dbReference type="PDBsum" id="6GC0"/>
<dbReference type="PDBsum" id="6GC4"/>
<dbReference type="PDBsum" id="6GC6"/>
<dbReference type="PDBsum" id="6GC8"/>
<dbReference type="PDBsum" id="6GWT"/>
<dbReference type="PDBsum" id="6GXM"/>
<dbReference type="PDBsum" id="6GXN"/>
<dbReference type="PDBsum" id="6GXO"/>
<dbReference type="PDBsum" id="6GXP"/>
<dbReference type="PDBsum" id="6H4N"/>
<dbReference type="PDBsum" id="6H58"/>
<dbReference type="PDBsum" id="6HRM"/>
<dbReference type="PDBsum" id="6I0Y"/>
<dbReference type="PDBsum" id="6I7V"/>
<dbReference type="PDBsum" id="6O9J"/>
<dbReference type="PDBsum" id="6O9K"/>
<dbReference type="PDBsum" id="6OFX"/>
<dbReference type="PDBsum" id="6OG7"/>
<dbReference type="PDBsum" id="6OGF"/>
<dbReference type="PDBsum" id="6OGG"/>
<dbReference type="PDBsum" id="6OGI"/>
<dbReference type="PDBsum" id="6OM6"/>
<dbReference type="PDBsum" id="6ORE"/>
<dbReference type="PDBsum" id="6ORL"/>
<dbReference type="PDBsum" id="6OSK"/>
<dbReference type="PDBsum" id="6OSQ"/>
<dbReference type="PDBsum" id="6OST"/>
<dbReference type="PDBsum" id="6OT3"/>
<dbReference type="PDBsum" id="6OUO"/>
<dbReference type="PDBsum" id="6PC5"/>
<dbReference type="PDBsum" id="6PC6"/>
<dbReference type="PDBsum" id="6PC7"/>
<dbReference type="PDBsum" id="6PC8"/>
<dbReference type="PDBsum" id="6PCH"/>
<dbReference type="PDBsum" id="6PCQ"/>
<dbReference type="PDBsum" id="6PCR"/>
<dbReference type="PDBsum" id="6PCS"/>
<dbReference type="PDBsum" id="6PCT"/>
<dbReference type="PDBsum" id="6PJ6"/>
<dbReference type="PDBsum" id="6Q98"/>
<dbReference type="PDBsum" id="6Q9A"/>
<dbReference type="PDBsum" id="6QDW"/>
<dbReference type="PDBsum" id="6QUL"/>
<dbReference type="PDBsum" id="6S0K"/>
<dbReference type="PDBsum" id="6SZS"/>
<dbReference type="PDBsum" id="6TBV"/>
<dbReference type="PDBsum" id="6TC3"/>
<dbReference type="PDBsum" id="6U48"/>
<dbReference type="PDBsum" id="6VU3"/>
<dbReference type="PDBsum" id="6VWL"/>
<dbReference type="PDBsum" id="6VWM"/>
<dbReference type="PDBsum" id="6VWN"/>
<dbReference type="PDBsum" id="6VYQ"/>
<dbReference type="PDBsum" id="6VYR"/>
<dbReference type="PDBsum" id="6VYS"/>
<dbReference type="PDBsum" id="6VYT"/>
<dbReference type="PDBsum" id="6VYU"/>
<dbReference type="PDBsum" id="6VYW"/>
<dbReference type="PDBsum" id="6VYX"/>
<dbReference type="PDBsum" id="6VYY"/>
<dbReference type="PDBsum" id="6VYZ"/>
<dbReference type="PDBsum" id="6VZ2"/>
<dbReference type="PDBsum" id="6VZ3"/>
<dbReference type="PDBsum" id="6VZ5"/>
<dbReference type="PDBsum" id="6VZ7"/>
<dbReference type="PDBsum" id="6VZJ"/>
<dbReference type="PDBsum" id="6WD0"/>
<dbReference type="PDBsum" id="6WD1"/>
<dbReference type="PDBsum" id="6WD2"/>
<dbReference type="PDBsum" id="6WD3"/>
<dbReference type="PDBsum" id="6WD4"/>
<dbReference type="PDBsum" id="6WD5"/>
<dbReference type="PDBsum" id="6WD6"/>
<dbReference type="PDBsum" id="6WD7"/>
<dbReference type="PDBsum" id="6WD8"/>
<dbReference type="PDBsum" id="6WD9"/>
<dbReference type="PDBsum" id="6WDA"/>
<dbReference type="PDBsum" id="6WDB"/>
<dbReference type="PDBsum" id="6WDC"/>
<dbReference type="PDBsum" id="6WDD"/>
<dbReference type="PDBsum" id="6WDE"/>
<dbReference type="PDBsum" id="6WDF"/>
<dbReference type="PDBsum" id="6WDG"/>
<dbReference type="PDBsum" id="6WDH"/>
<dbReference type="PDBsum" id="6WDI"/>
<dbReference type="PDBsum" id="6WDJ"/>
<dbReference type="PDBsum" id="6WDK"/>
<dbReference type="PDBsum" id="6WDL"/>
<dbReference type="PDBsum" id="6WDM"/>
<dbReference type="PDBsum" id="6WNT"/>
<dbReference type="PDBsum" id="6WNV"/>
<dbReference type="PDBsum" id="6WNW"/>
<dbReference type="PDBsum" id="6WYV"/>
<dbReference type="PDBsum" id="6X6T"/>
<dbReference type="PDBsum" id="6X7F"/>
<dbReference type="PDBsum" id="6X7K"/>
<dbReference type="PDBsum" id="6X9Q"/>
<dbReference type="PDBsum" id="6XDQ"/>
<dbReference type="PDBsum" id="6XDR"/>
<dbReference type="PDBsum" id="6XGF"/>
<dbReference type="PDBsum" id="6XII"/>
<dbReference type="PDBsum" id="6XIJ"/>
<dbReference type="PDBsum" id="6XZ7"/>
<dbReference type="PDBsum" id="6XZA"/>
<dbReference type="PDBsum" id="6XZB"/>
<dbReference type="PDBsum" id="6Y69"/>
<dbReference type="PDBsum" id="6YS3"/>
<dbReference type="PDBsum" id="6YSR"/>
<dbReference type="PDBsum" id="6YSS"/>
<dbReference type="PDBsum" id="6YST"/>
<dbReference type="PDBsum" id="6YSU"/>
<dbReference type="PDBsum" id="6ZTJ"/>
<dbReference type="PDBsum" id="6ZTL"/>
<dbReference type="PDBsum" id="6ZTM"/>
<dbReference type="PDBsum" id="6ZTN"/>
<dbReference type="PDBsum" id="6ZTO"/>
<dbReference type="PDBsum" id="6ZTP"/>
<dbReference type="PDBsum" id="6ZU1"/>
<dbReference type="PDBsum" id="7ABZ"/>
<dbReference type="PDBsum" id="7AC7"/>
<dbReference type="PDBsum" id="7ACJ"/>
<dbReference type="PDBsum" id="7ACR"/>
<dbReference type="PDBsum" id="7B5K"/>
<dbReference type="PDBsum" id="7BL2"/>
<dbReference type="PDBsum" id="7BL3"/>
<dbReference type="PDBsum" id="7BL4"/>
<dbReference type="PDBsum" id="7BL5"/>
<dbReference type="PDBsum" id="7BL6"/>
<dbReference type="PDBsum" id="7BV8"/>
<dbReference type="PDBsum" id="7D6Z"/>
<dbReference type="PDBsum" id="7D80"/>
<dbReference type="PDBsum" id="7JSS"/>
<dbReference type="PDBsum" id="7JSW"/>
<dbReference type="PDBsum" id="7JSZ"/>
<dbReference type="PDBsum" id="7JT1"/>
<dbReference type="PDBsum" id="7JT2"/>
<dbReference type="PDBsum" id="7JT3"/>
<dbReference type="PDBsum" id="7K00"/>
<dbReference type="PDBsum" id="7K50"/>
<dbReference type="PDBsum" id="7K51"/>
<dbReference type="PDBsum" id="7K52"/>
<dbReference type="PDBsum" id="7K53"/>
<dbReference type="PDBsum" id="7K54"/>
<dbReference type="PDBsum" id="7K55"/>
<dbReference type="PDBsum" id="7LV0"/>
<dbReference type="PDBsum" id="7LVK"/>
<dbReference type="PDBsum" id="7M5D"/>
<dbReference type="PDBsum" id="7N1P"/>
<dbReference type="PDBsum" id="7N2C"/>
<dbReference type="PDBsum" id="7N2U"/>
<dbReference type="PDBsum" id="7N2V"/>
<dbReference type="PDBsum" id="7N30"/>
<dbReference type="PDBsum" id="7N31"/>
<dbReference type="PDBsum" id="7NBU"/>
<dbReference type="PDBsum" id="7NSO"/>
<dbReference type="PDBsum" id="7NSP"/>
<dbReference type="PDBsum" id="7NSQ"/>
<dbReference type="PDBsum" id="7NWT"/>
<dbReference type="PDBsum" id="7NWW"/>
<dbReference type="PDBsum" id="7O19"/>
<dbReference type="PDBsum" id="7O1A"/>
<dbReference type="PDBsum" id="7O1C"/>
<dbReference type="PDBsum" id="7ODE"/>
<dbReference type="PDBsum" id="7OIF"/>
<dbReference type="PDBsum" id="7OIG"/>
<dbReference type="PDBsum" id="7OII"/>
<dbReference type="PDBsum" id="7OIZ"/>
<dbReference type="PDBsum" id="7OJ0"/>
<dbReference type="PDBsum" id="7OT5"/>
<dbReference type="PDBsum" id="7P3K"/>
<dbReference type="PDBsum" id="7PJS"/>
<dbReference type="PDBsum" id="7PJT"/>
<dbReference type="PDBsum" id="7PJU"/>
<dbReference type="PDBsum" id="7PJV"/>
<dbReference type="PDBsum" id="7PJW"/>
<dbReference type="PDBsum" id="7PJX"/>
<dbReference type="PDBsum" id="7PJY"/>
<dbReference type="PDBsum" id="7PJZ"/>
<dbReference type="PDBsum" id="7Q4K"/>
<dbReference type="PDBsum" id="7QG8"/>
<dbReference type="PDBsum" id="7QGN"/>
<dbReference type="PDBsum" id="7QGR"/>
<dbReference type="PDBsum" id="7QQ3"/>
<dbReference type="PDBsum" id="7S1G"/>
<dbReference type="PDBsum" id="7S1H"/>
<dbReference type="PDBsum" id="7S1I"/>
<dbReference type="PDBsum" id="7S1J"/>
<dbReference type="PDBsum" id="7S1K"/>
<dbReference type="PDBsum" id="7SA4"/>
<dbReference type="PDBsum" id="7SS9"/>
<dbReference type="PDBsum" id="7SSD"/>
<dbReference type="PDBsum" id="7SSL"/>
<dbReference type="PDBsum" id="7SSN"/>
<dbReference type="PDBsum" id="7SSO"/>
<dbReference type="PDBsum" id="7SSW"/>
<dbReference type="PDBsum" id="7ST2"/>
<dbReference type="PDBsum" id="7ST6"/>
<dbReference type="PDBsum" id="7ST7"/>
<dbReference type="PDBsum" id="7TOS"/>
<dbReference type="PDBsum" id="7UG7"/>
<dbReference type="PDBsum" id="7UPH"/>
<dbReference type="PDBsum" id="7Y7C"/>
<dbReference type="PDBsum" id="7Y7D"/>
<dbReference type="PDBsum" id="7Y7E"/>
<dbReference type="PDBsum" id="7Y7F"/>
<dbReference type="PDBsum" id="7Y7G"/>
<dbReference type="PDBsum" id="7Y7H"/>
<dbReference type="PDBsum" id="7Z20"/>
<dbReference type="PDBsum" id="7ZOD"/>
<dbReference type="PDBsum" id="7ZP8"/>
<dbReference type="PDBsum" id="7ZQ5"/>
<dbReference type="PDBsum" id="7ZQ6"/>
<dbReference type="PDBsum" id="7ZTA"/>
<dbReference type="PDBsum" id="8A3L"/>
<dbReference type="PDBsum" id="8AKN"/>
<dbReference type="PDBsum" id="8AM9"/>
<dbReference type="PDBsum" id="8ANA"/>
<dbReference type="PDBsum" id="8AP4"/>
<dbReference type="PDBsum" id="8AYE"/>
<dbReference type="PDBsum" id="8B0X"/>
<dbReference type="PDBsum" id="8B7Y"/>
<dbReference type="PDBsum" id="8BF7"/>
<dbReference type="PDBsum" id="8BGE"/>
<dbReference type="PDBsum" id="8BGH"/>
<dbReference type="PDBsum" id="8BH4"/>
<dbReference type="PDBsum" id="8BHJ"/>
<dbReference type="PDBsum" id="8BHL"/>
<dbReference type="PDBsum" id="8BHN"/>
<dbReference type="PDBsum" id="8BHP"/>
<dbReference type="PDBsum" id="8BIL"/>
<dbReference type="PDBsum" id="8BIM"/>
<dbReference type="PDBsum" id="8C8X"/>
<dbReference type="PDBsum" id="8C8Y"/>
<dbReference type="PDBsum" id="8C91"/>
<dbReference type="PDBsum" id="8CAM"/>
<dbReference type="PDBsum" id="8CEU"/>
<dbReference type="PDBsum" id="8CGD"/>
<dbReference type="PDBsum" id="8CGK"/>
<dbReference type="PDBsum" id="8CGV"/>
<dbReference type="PDBsum" id="8E30"/>
<dbReference type="PDBsum" id="8E32"/>
<dbReference type="PDBsum" id="8E33"/>
<dbReference type="PDBsum" id="8E35"/>
<dbReference type="PDBsum" id="8E36"/>
<dbReference type="PDBsum" id="8E3L"/>
<dbReference type="PDBsum" id="8E3M"/>
<dbReference type="PDBsum" id="8E3O"/>
<dbReference type="PDBsum" id="8E41"/>
<dbReference type="PDBsum" id="8E42"/>
<dbReference type="PDBsum" id="8E43"/>
<dbReference type="PDBsum" id="8E44"/>
<dbReference type="PDBsum" id="8E45"/>
<dbReference type="PDBsum" id="8E46"/>
<dbReference type="PDBsum" id="8E47"/>
<dbReference type="PDBsum" id="8E48"/>
<dbReference type="PDBsum" id="8E49"/>
<dbReference type="PDBsum" id="8EIU"/>
<dbReference type="PDBsum" id="8EKC"/>
<dbReference type="PDBsum" id="8EMM"/>
<dbReference type="PDBsum" id="8FIZ"/>
<dbReference type="PDBsum" id="8FTO"/>
<dbReference type="PDBsum" id="8FZD"/>
<dbReference type="PDBsum" id="8FZE"/>
<dbReference type="PDBsum" id="8FZF"/>
<dbReference type="PDBsum" id="8FZG"/>
<dbReference type="PDBsum" id="8FZH"/>
<dbReference type="PDBsum" id="8FZI"/>
<dbReference type="PDBsum" id="8FZJ"/>
<dbReference type="PDBsum" id="8G2U"/>
<dbReference type="PDBsum" id="8G31"/>
<dbReference type="PDBsum" id="8G34"/>
<dbReference type="PDBsum" id="8G38"/>
<dbReference type="PDBsum" id="8G6W"/>
<dbReference type="PDBsum" id="8G6X"/>
<dbReference type="PDBsum" id="8G6Y"/>
<dbReference type="PDBsum" id="8G7P"/>
<dbReference type="PDBsum" id="8G7Q"/>
<dbReference type="PDBsum" id="8G7R"/>
<dbReference type="PDBsum" id="8G7S"/>
<dbReference type="PDBsum" id="8HSP"/>
<dbReference type="PDBsum" id="8HTZ"/>
<dbReference type="PDBsum" id="8HU1"/>
<dbReference type="PDBsum" id="8IFB"/>
<dbReference type="PDBsum" id="8IFC"/>
<dbReference type="PDBsum" id="8J1Z"/>
<dbReference type="PDBsum" id="8P16"/>
<dbReference type="PDBsum" id="8P17"/>
<dbReference type="PDBsum" id="8P18"/>
<dbReference type="PDBsum" id="8PEG"/>
<dbReference type="PDBsum" id="8PHJ"/>
<dbReference type="PDBsum" id="8PKL"/>
<dbReference type="PDBsum" id="8PVA"/>
<dbReference type="PDBsum" id="8Q4F"/>
<dbReference type="PDBsum" id="8QBT"/>
<dbReference type="PDBsum" id="8QK7"/>
<dbReference type="PDBsum" id="8QOA"/>
<dbReference type="PDBsum" id="8R3V"/>
<dbReference type="PDBsum" id="8R6C"/>
<dbReference type="PDBsum" id="8R8M"/>
<dbReference type="PDBsum" id="8RCL"/>
<dbReference type="PDBsum" id="8RCM"/>
<dbReference type="PDBsum" id="8RCS"/>
<dbReference type="PDBsum" id="8RCT"/>
<dbReference type="PDBsum" id="8RPY"/>
<dbReference type="PDBsum" id="8RPZ"/>
<dbReference type="PDBsum" id="8RQ0"/>
<dbReference type="PDBsum" id="8RQ2"/>
<dbReference type="PDBsum" id="8SYL"/>
<dbReference type="PDBsum" id="8T5D"/>
<dbReference type="PDBsum" id="8T5H"/>
<dbReference type="PDBsum" id="8UPO"/>
<dbReference type="PDBsum" id="8UPR"/>
<dbReference type="PDBsum" id="8UQL"/>
<dbReference type="PDBsum" id="8UQM"/>
<dbReference type="PDBsum" id="8UQP"/>
<dbReference type="PDBsum" id="8UR0"/>
<dbReference type="PDBsum" id="8URH"/>
<dbReference type="PDBsum" id="8URI"/>
<dbReference type="PDBsum" id="8URX"/>
<dbReference type="PDBsum" id="8URY"/>
<dbReference type="PDBsum" id="8VS9"/>
<dbReference type="PDBsum" id="8VSA"/>
<dbReference type="PDBsum" id="8W51"/>
<dbReference type="PDBsum" id="8YUO"/>
<dbReference type="PDBsum" id="8YUP"/>
<dbReference type="PDBsum" id="8YUQ"/>
<dbReference type="PDBsum" id="8YUR"/>
<dbReference type="PDBsum" id="8YUS"/>
<dbReference type="PDBsum" id="9AX7"/>
<dbReference type="PDBsum" id="9AX8"/>
<dbReference type="PDBsum" id="9CG5"/>
<dbReference type="PDBsum" id="9CG6"/>
<dbReference type="PDBsum" id="9CG7"/>
<dbReference type="PDBsum" id="9D89"/>
<dbReference type="PDBsum" id="9FBV"/>
<dbReference type="PDBsum" id="9GFT"/>
<dbReference type="PDBsum" id="9GGR"/>
<dbReference type="PDBsum" id="9GR1"/>
<dbReference type="PDBsum" id="9H3T"/>
<dbReference type="PDBsum" id="9H3U"/>
<dbReference type="PDBsum" id="9H3V"/>
<dbReference type="PDBsum" id="9H3W"/>
<dbReference type="PDBsum" id="9H3X"/>
<dbReference type="PDBsum" id="9H3Y"/>
<dbReference type="PDBsum" id="9H3Z"/>
<dbReference type="PDBsum" id="9HA5"/>
<dbReference type="PDBsum" id="9HA6"/>
<dbReference type="PDBsum" id="9MOR"/>
<dbReference type="PDBsum" id="9MQ4"/>
<dbReference type="EMDB" id="EMD-0076"/>
<dbReference type="EMDB" id="EMD-0080"/>
<dbReference type="EMDB" id="EMD-0081"/>
<dbReference type="EMDB" id="EMD-0082"/>
<dbReference type="EMDB" id="EMD-0083"/>
<dbReference type="EMDB" id="EMD-0137"/>
<dbReference type="EMDB" id="EMD-0139"/>
<dbReference type="EMDB" id="EMD-0261"/>
<dbReference type="EMDB" id="EMD-0322"/>
<dbReference type="EMDB" id="EMD-10073"/>
<dbReference type="EMDB" id="EMD-10353"/>
<dbReference type="EMDB" id="EMD-10453"/>
<dbReference type="EMDB" id="EMD-10458"/>
<dbReference type="EMDB" id="EMD-10655"/>
<dbReference type="EMDB" id="EMD-10656"/>
<dbReference type="EMDB" id="EMD-10657"/>
<dbReference type="EMDB" id="EMD-10705"/>
<dbReference type="EMDB" id="EMD-10905"/>
<dbReference type="EMDB" id="EMD-10906"/>
<dbReference type="EMDB" id="EMD-10907"/>
<dbReference type="EMDB" id="EMD-10908"/>
<dbReference type="EMDB" id="EMD-11418"/>
<dbReference type="EMDB" id="EMD-11419"/>
<dbReference type="EMDB" id="EMD-11420"/>
<dbReference type="EMDB" id="EMD-11421"/>
<dbReference type="EMDB" id="EMD-11422"/>
<dbReference type="EMDB" id="EMD-11423"/>
<dbReference type="EMDB" id="EMD-11426"/>
<dbReference type="EMDB" id="EMD-11710"/>
<dbReference type="EMDB" id="EMD-11713"/>
<dbReference type="EMDB" id="EMD-11717"/>
<dbReference type="EMDB" id="EMD-11718"/>
<dbReference type="EMDB" id="EMD-12035"/>
<dbReference type="EMDB" id="EMD-12215"/>
<dbReference type="EMDB" id="EMD-12216"/>
<dbReference type="EMDB" id="EMD-12217"/>
<dbReference type="EMDB" id="EMD-12218"/>
<dbReference type="EMDB" id="EMD-12219"/>
<dbReference type="EMDB" id="EMD-12261"/>
<dbReference type="EMDB" id="EMD-12573"/>
<dbReference type="EMDB" id="EMD-12574"/>
<dbReference type="EMDB" id="EMD-12575"/>
<dbReference type="EMDB" id="EMD-12635"/>
<dbReference type="EMDB" id="EMD-12636"/>
<dbReference type="EMDB" id="EMD-12693"/>
<dbReference type="EMDB" id="EMD-12694"/>
<dbReference type="EMDB" id="EMD-12695"/>
<dbReference type="EMDB" id="EMD-12826"/>
<dbReference type="EMDB" id="EMD-12928"/>
<dbReference type="EMDB" id="EMD-12929"/>
<dbReference type="EMDB" id="EMD-12930"/>
<dbReference type="EMDB" id="EMD-12936"/>
<dbReference type="EMDB" id="EMD-12937"/>
<dbReference type="EMDB" id="EMD-13055"/>
<dbReference type="EMDB" id="EMD-13180"/>
<dbReference type="EMDB" id="EMD-13458"/>
<dbReference type="EMDB" id="EMD-13459"/>
<dbReference type="EMDB" id="EMD-13461"/>
<dbReference type="EMDB" id="EMD-13462"/>
<dbReference type="EMDB" id="EMD-13463"/>
<dbReference type="EMDB" id="EMD-13464"/>
<dbReference type="EMDB" id="EMD-13465"/>
<dbReference type="EMDB" id="EMD-13805"/>
<dbReference type="EMDB" id="EMD-13952"/>
<dbReference type="EMDB" id="EMD-13956"/>
<dbReference type="EMDB" id="EMD-13958"/>
<dbReference type="EMDB" id="EMD-14121"/>
<dbReference type="EMDB" id="EMD-14454"/>
<dbReference type="EMDB" id="EMD-14846"/>
<dbReference type="EMDB" id="EMD-14850"/>
<dbReference type="EMDB" id="EMD-14864"/>
<dbReference type="EMDB" id="EMD-14865"/>
<dbReference type="EMDB" id="EMD-14956"/>
<dbReference type="EMDB" id="EMD-15116"/>
<dbReference type="EMDB" id="EMD-15558"/>
<dbReference type="EMDB" id="EMD-15712"/>
<dbReference type="EMDB" id="EMD-15793"/>
<dbReference type="EMDB" id="EMD-15905"/>
<dbReference type="EMDB" id="EMD-16015"/>
<dbReference type="EMDB" id="EMD-16029"/>
<dbReference type="EMDB" id="EMD-16031"/>
<dbReference type="EMDB" id="EMD-16047"/>
<dbReference type="EMDB" id="EMD-16057"/>
<dbReference type="EMDB" id="EMD-16059"/>
<dbReference type="EMDB" id="EMD-16062"/>
<dbReference type="EMDB" id="EMD-16065"/>
<dbReference type="EMDB" id="EMD-16081"/>
<dbReference type="EMDB" id="EMD-16082"/>
<dbReference type="EMDB" id="EMD-16494"/>
<dbReference type="EMDB" id="EMD-16495"/>
<dbReference type="EMDB" id="EMD-16498"/>
<dbReference type="EMDB" id="EMD-16530"/>
<dbReference type="EMDB" id="EMD-16613"/>
<dbReference type="EMDB" id="EMD-16641"/>
<dbReference type="EMDB" id="EMD-16646"/>
<dbReference type="EMDB" id="EMD-16652"/>
<dbReference type="EMDB" id="EMD-17346"/>
<dbReference type="EMDB" id="EMD-17347"/>
<dbReference type="EMDB" id="EMD-17348"/>
<dbReference type="EMDB" id="EMD-17631"/>
<dbReference type="EMDB" id="EMD-17667"/>
<dbReference type="EMDB" id="EMD-17743"/>
<dbReference type="EMDB" id="EMD-17959"/>
<dbReference type="EMDB" id="EMD-18145"/>
<dbReference type="EMDB" id="EMD-18320"/>
<dbReference type="EMDB" id="EMD-18458"/>
<dbReference type="EMDB" id="EMD-18534"/>
<dbReference type="EMDB" id="EMD-18875"/>
<dbReference type="EMDB" id="EMD-18950"/>
<dbReference type="EMDB" id="EMD-19004"/>
<dbReference type="EMDB" id="EMD-19054"/>
<dbReference type="EMDB" id="EMD-19055"/>
<dbReference type="EMDB" id="EMD-19058"/>
<dbReference type="EMDB" id="EMD-19059"/>
<dbReference type="EMDB" id="EMD-19426"/>
<dbReference type="EMDB" id="EMD-19427"/>
<dbReference type="EMDB" id="EMD-19428"/>
<dbReference type="EMDB" id="EMD-19429"/>
<dbReference type="EMDB" id="EMD-20048"/>
<dbReference type="EMDB" id="EMD-20052"/>
<dbReference type="EMDB" id="EMD-20056"/>
<dbReference type="EMDB" id="EMD-20057"/>
<dbReference type="EMDB" id="EMD-20058"/>
<dbReference type="EMDB" id="EMD-20121"/>
<dbReference type="EMDB" id="EMD-20296"/>
<dbReference type="EMDB" id="EMD-20297"/>
<dbReference type="EMDB" id="EMD-20298"/>
<dbReference type="EMDB" id="EMD-20299"/>
<dbReference type="EMDB" id="EMD-20300"/>
<dbReference type="EMDB" id="EMD-20304"/>
<dbReference type="EMDB" id="EMD-20305"/>
<dbReference type="EMDB" id="EMD-20306"/>
<dbReference type="EMDB" id="EMD-20307"/>
<dbReference type="EMDB" id="EMD-21386"/>
<dbReference type="EMDB" id="EMD-21420"/>
<dbReference type="EMDB" id="EMD-21421"/>
<dbReference type="EMDB" id="EMD-21422"/>
<dbReference type="EMDB" id="EMD-21468"/>
<dbReference type="EMDB" id="EMD-21469"/>
<dbReference type="EMDB" id="EMD-21470"/>
<dbReference type="EMDB" id="EMD-21471"/>
<dbReference type="EMDB" id="EMD-21472"/>
<dbReference type="EMDB" id="EMD-21474"/>
<dbReference type="EMDB" id="EMD-21475"/>
<dbReference type="EMDB" id="EMD-21476"/>
<dbReference type="EMDB" id="EMD-21477"/>
<dbReference type="EMDB" id="EMD-21482"/>
<dbReference type="EMDB" id="EMD-21483"/>
<dbReference type="EMDB" id="EMD-21485"/>
<dbReference type="EMDB" id="EMD-21486"/>
<dbReference type="EMDB" id="EMD-21494"/>
<dbReference type="EMDB" id="EMD-21619"/>
<dbReference type="EMDB" id="EMD-21620"/>
<dbReference type="EMDB" id="EMD-21621"/>
<dbReference type="EMDB" id="EMD-21622"/>
<dbReference type="EMDB" id="EMD-21623"/>
<dbReference type="EMDB" id="EMD-21624"/>
<dbReference type="EMDB" id="EMD-21625"/>
<dbReference type="EMDB" id="EMD-21626"/>
<dbReference type="EMDB" id="EMD-21627"/>
<dbReference type="EMDB" id="EMD-21628"/>
<dbReference type="EMDB" id="EMD-21629"/>
<dbReference type="EMDB" id="EMD-21630"/>
<dbReference type="EMDB" id="EMD-21631"/>
<dbReference type="EMDB" id="EMD-21632"/>
<dbReference type="EMDB" id="EMD-21633"/>
<dbReference type="EMDB" id="EMD-21634"/>
<dbReference type="EMDB" id="EMD-21635"/>
<dbReference type="EMDB" id="EMD-21636"/>
<dbReference type="EMDB" id="EMD-21637"/>
<dbReference type="EMDB" id="EMD-21638"/>
<dbReference type="EMDB" id="EMD-21639"/>
<dbReference type="EMDB" id="EMD-21640"/>
<dbReference type="EMDB" id="EMD-21641"/>
<dbReference type="EMDB" id="EMD-21856"/>
<dbReference type="EMDB" id="EMD-21857"/>
<dbReference type="EMDB" id="EMD-21858"/>
<dbReference type="EMDB" id="EMD-21969"/>
<dbReference type="EMDB" id="EMD-22082"/>
<dbReference type="EMDB" id="EMD-22084"/>
<dbReference type="EMDB" id="EMD-22087"/>
<dbReference type="EMDB" id="EMD-22107"/>
<dbReference type="EMDB" id="EMD-22141"/>
<dbReference type="EMDB" id="EMD-22142"/>
<dbReference type="EMDB" id="EMD-22181"/>
<dbReference type="EMDB" id="EMD-22192"/>
<dbReference type="EMDB" id="EMD-22193"/>
<dbReference type="EMDB" id="EMD-22459"/>
<dbReference type="EMDB" id="EMD-22461"/>
<dbReference type="EMDB" id="EMD-22464"/>
<dbReference type="EMDB" id="EMD-22466"/>
<dbReference type="EMDB" id="EMD-22469"/>
<dbReference type="EMDB" id="EMD-22472"/>
<dbReference type="EMDB" id="EMD-22586"/>
<dbReference type="EMDB" id="EMD-22669"/>
<dbReference type="EMDB" id="EMD-22670"/>
<dbReference type="EMDB" id="EMD-22671"/>
<dbReference type="EMDB" id="EMD-22672"/>
<dbReference type="EMDB" id="EMD-22673"/>
<dbReference type="EMDB" id="EMD-22674"/>
<dbReference type="EMDB" id="EMD-23528"/>
<dbReference type="EMDB" id="EMD-23539"/>
<dbReference type="EMDB" id="EMD-23673"/>
<dbReference type="EMDB" id="EMD-24120"/>
<dbReference type="EMDB" id="EMD-24132"/>
<dbReference type="EMDB" id="EMD-24133"/>
<dbReference type="EMDB" id="EMD-24134"/>
<dbReference type="EMDB" id="EMD-24135"/>
<dbReference type="EMDB" id="EMD-24136"/>
<dbReference type="EMDB" id="EMD-24800"/>
<dbReference type="EMDB" id="EMD-24801"/>
<dbReference type="EMDB" id="EMD-24802"/>
<dbReference type="EMDB" id="EMD-24803"/>
<dbReference type="EMDB" id="EMD-24804"/>
<dbReference type="EMDB" id="EMD-24944"/>
<dbReference type="EMDB" id="EMD-25405"/>
<dbReference type="EMDB" id="EMD-25407"/>
<dbReference type="EMDB" id="EMD-25409"/>
<dbReference type="EMDB" id="EMD-25410"/>
<dbReference type="EMDB" id="EMD-25411"/>
<dbReference type="EMDB" id="EMD-25415"/>
<dbReference type="EMDB" id="EMD-25418"/>
<dbReference type="EMDB" id="EMD-25420"/>
<dbReference type="EMDB" id="EMD-25421"/>
<dbReference type="EMDB" id="EMD-26037"/>
<dbReference type="EMDB" id="EMD-26486"/>
<dbReference type="EMDB" id="EMD-26666"/>
<dbReference type="EMDB" id="EMD-27852"/>
<dbReference type="EMDB" id="EMD-27854"/>
<dbReference type="EMDB" id="EMD-27855"/>
<dbReference type="EMDB" id="EMD-27857"/>
<dbReference type="EMDB" id="EMD-27858"/>
<dbReference type="EMDB" id="EMD-27867"/>
<dbReference type="EMDB" id="EMD-27868"/>
<dbReference type="EMDB" id="EMD-27869"/>
<dbReference type="EMDB" id="EMD-27876"/>
<dbReference type="EMDB" id="EMD-27877"/>
<dbReference type="EMDB" id="EMD-27878"/>
<dbReference type="EMDB" id="EMD-27879"/>
<dbReference type="EMDB" id="EMD-27880"/>
<dbReference type="EMDB" id="EMD-27881"/>
<dbReference type="EMDB" id="EMD-27882"/>
<dbReference type="EMDB" id="EMD-27883"/>
<dbReference type="EMDB" id="EMD-27884"/>
<dbReference type="EMDB" id="EMD-28165"/>
<dbReference type="EMDB" id="EMD-28197"/>
<dbReference type="EMDB" id="EMD-28254"/>
<dbReference type="EMDB" id="EMD-29214"/>
<dbReference type="EMDB" id="EMD-29449"/>
<dbReference type="EMDB" id="EMD-29620"/>
<dbReference type="EMDB" id="EMD-29621"/>
<dbReference type="EMDB" id="EMD-29624"/>
<dbReference type="EMDB" id="EMD-29627"/>
<dbReference type="EMDB" id="EMD-29628"/>
<dbReference type="EMDB" id="EMD-29631"/>
<dbReference type="EMDB" id="EMD-29634"/>
<dbReference type="EMDB" id="EMD-29786"/>
<dbReference type="EMDB" id="EMD-29787"/>
<dbReference type="EMDB" id="EMD-29788"/>
<dbReference type="EMDB" id="EMD-29819"/>
<dbReference type="EMDB" id="EMD-29820"/>
<dbReference type="EMDB" id="EMD-29821"/>
<dbReference type="EMDB" id="EMD-29822"/>
<dbReference type="EMDB" id="EMD-30215"/>
<dbReference type="EMDB" id="EMD-30598"/>
<dbReference type="EMDB" id="EMD-30611"/>
<dbReference type="EMDB" id="EMD-33660"/>
<dbReference type="EMDB" id="EMD-33661"/>
<dbReference type="EMDB" id="EMD-33662"/>
<dbReference type="EMDB" id="EMD-33663"/>
<dbReference type="EMDB" id="EMD-33664"/>
<dbReference type="EMDB" id="EMD-33665"/>
<dbReference type="EMDB" id="EMD-3489"/>
<dbReference type="EMDB" id="EMD-3490"/>
<dbReference type="EMDB" id="EMD-3492"/>
<dbReference type="EMDB" id="EMD-3493"/>
<dbReference type="EMDB" id="EMD-35001"/>
<dbReference type="EMDB" id="EMD-35020"/>
<dbReference type="EMDB" id="EMD-35022"/>
<dbReference type="EMDB" id="EMD-3508"/>
<dbReference type="EMDB" id="EMD-35411"/>
<dbReference type="EMDB" id="EMD-35412"/>
<dbReference type="EMDB" id="EMD-35939"/>
<dbReference type="EMDB" id="EMD-3617"/>
<dbReference type="EMDB" id="EMD-3713"/>
<dbReference type="EMDB" id="EMD-37271"/>
<dbReference type="EMDB" id="EMD-3730"/>
<dbReference type="EMDB" id="EMD-3898"/>
<dbReference type="EMDB" id="EMD-3899"/>
<dbReference type="EMDB" id="EMD-3903"/>
<dbReference type="EMDB" id="EMD-39577"/>
<dbReference type="EMDB" id="EMD-39578"/>
<dbReference type="EMDB" id="EMD-39579"/>
<dbReference type="EMDB" id="EMD-39580"/>
<dbReference type="EMDB" id="EMD-39581"/>
<dbReference type="EMDB" id="EMD-4001"/>
<dbReference type="EMDB" id="EMD-40882"/>
<dbReference type="EMDB" id="EMD-4121"/>
<dbReference type="EMDB" id="EMD-4122"/>
<dbReference type="EMDB" id="EMD-4123"/>
<dbReference type="EMDB" id="EMD-4124"/>
<dbReference type="EMDB" id="EMD-4125"/>
<dbReference type="EMDB" id="EMD-4126"/>
<dbReference type="EMDB" id="EMD-42453"/>
<dbReference type="EMDB" id="EMD-42454"/>
<dbReference type="EMDB" id="EMD-42473"/>
<dbReference type="EMDB" id="EMD-42474"/>
<dbReference type="EMDB" id="EMD-42477"/>
<dbReference type="EMDB" id="EMD-42479"/>
<dbReference type="EMDB" id="EMD-42492"/>
<dbReference type="EMDB" id="EMD-42493"/>
<dbReference type="EMDB" id="EMD-42503"/>
<dbReference type="EMDB" id="EMD-42504"/>
<dbReference type="EMDB" id="EMD-43490"/>
<dbReference type="EMDB" id="EMD-43491"/>
<dbReference type="EMDB" id="EMD-4378"/>
<dbReference type="EMDB" id="EMD-4379"/>
<dbReference type="EMDB" id="EMD-4380"/>
<dbReference type="EMDB" id="EMD-4381"/>
<dbReference type="EMDB" id="EMD-4383"/>
<dbReference type="EMDB" id="EMD-43929"/>
<dbReference type="EMDB" id="EMD-43930"/>
<dbReference type="EMDB" id="EMD-4477"/>
<dbReference type="EMDB" id="EMD-4478"/>
<dbReference type="EMDB" id="EMD-45569"/>
<dbReference type="EMDB" id="EMD-45572"/>
<dbReference type="EMDB" id="EMD-45573"/>
<dbReference type="EMDB" id="EMD-4638"/>
<dbReference type="EMDB" id="EMD-46632"/>
<dbReference type="EMDB" id="EMD-48479"/>
<dbReference type="EMDB" id="EMD-48513"/>
<dbReference type="EMDB" id="EMD-50296"/>
<dbReference type="EMDB" id="EMD-51318"/>
<dbReference type="EMDB" id="EMD-51340"/>
<dbReference type="EMDB" id="EMD-51837"/>
<dbReference type="EMDB" id="EMD-51838"/>
<dbReference type="EMDB" id="EMD-51839"/>
<dbReference type="EMDB" id="EMD-51840"/>
<dbReference type="EMDB" id="EMD-51841"/>
<dbReference type="EMDB" id="EMD-51842"/>
<dbReference type="EMDB" id="EMD-51843"/>
<dbReference type="EMDB" id="EMD-51977"/>
<dbReference type="EMDB" id="EMD-51978"/>
<dbReference type="EMDB" id="EMD-6667"/>
<dbReference type="EMDB" id="EMD-7289"/>
<dbReference type="EMDB" id="EMD-7340"/>
<dbReference type="EMDB" id="EMD-8000"/>
<dbReference type="EMDB" id="EMD-8001"/>
<dbReference type="EMDB" id="EMD-8002"/>
<dbReference type="EMDB" id="EMD-8003"/>
<dbReference type="EMDB" id="EMD-8004"/>
<dbReference type="EMDB" id="EMD-8107"/>
<dbReference type="EMDB" id="EMD-8175"/>
<dbReference type="EMDB" id="EMD-8176"/>
<dbReference type="EMDB" id="EMD-8237"/>
<dbReference type="EMDB" id="EMD-8238"/>
<dbReference type="EMDB" id="EMD-8279"/>
<dbReference type="EMDB" id="EMD-8280"/>
<dbReference type="EMDB" id="EMD-8281"/>
<dbReference type="EMDB" id="EMD-8282"/>
<dbReference type="EMDB" id="EMD-8505"/>
<dbReference type="EMDB" id="EMD-8615"/>
<dbReference type="EMDB" id="EMD-8616"/>
<dbReference type="EMDB" id="EMD-8617"/>
<dbReference type="EMDB" id="EMD-8618"/>
<dbReference type="EMDB" id="EMD-8619"/>
<dbReference type="EMDB" id="EMD-8620"/>
<dbReference type="EMDB" id="EMD-8813"/>
<dbReference type="EMDB" id="EMD-8814"/>
<dbReference type="EMDB" id="EMD-8815"/>
<dbReference type="EMDB" id="EMD-8828"/>
<dbReference type="SMR" id="P60422"/>
<dbReference type="BioGRID" id="4261289">
    <property type="interactions" value="371"/>
</dbReference>
<dbReference type="BioGRID" id="852132">
    <property type="interactions" value="7"/>
</dbReference>
<dbReference type="ComplexPortal" id="CPX-1944">
    <property type="entry name" value="DnaA-L2 DNA replication initiation inhibitory complex"/>
</dbReference>
<dbReference type="ComplexPortal" id="CPX-3807">
    <property type="entry name" value="50S large ribosomal subunit"/>
</dbReference>
<dbReference type="DIP" id="DIP-35747N"/>
<dbReference type="FunCoup" id="P60422">
    <property type="interactions" value="1565"/>
</dbReference>
<dbReference type="IntAct" id="P60422">
    <property type="interactions" value="383"/>
</dbReference>
<dbReference type="STRING" id="511145.b3317"/>
<dbReference type="ChEMBL" id="CHEMBL2363121"/>
<dbReference type="iPTMnet" id="P60422"/>
<dbReference type="jPOST" id="P60422"/>
<dbReference type="PaxDb" id="511145-b3317"/>
<dbReference type="EnsemblBacteria" id="AAC76342">
    <property type="protein sequence ID" value="AAC76342"/>
    <property type="gene ID" value="b3317"/>
</dbReference>
<dbReference type="GeneID" id="93778670"/>
<dbReference type="GeneID" id="947820"/>
<dbReference type="KEGG" id="ecj:JW3279"/>
<dbReference type="KEGG" id="eco:b3317"/>
<dbReference type="KEGG" id="ecoc:C3026_18025"/>
<dbReference type="PATRIC" id="fig|1411691.4.peg.3414"/>
<dbReference type="EchoBASE" id="EB0858"/>
<dbReference type="eggNOG" id="COG0090">
    <property type="taxonomic scope" value="Bacteria"/>
</dbReference>
<dbReference type="HOGENOM" id="CLU_036235_2_1_6"/>
<dbReference type="InParanoid" id="P60422"/>
<dbReference type="OMA" id="GGRHPCT"/>
<dbReference type="OrthoDB" id="9778722at2"/>
<dbReference type="PhylomeDB" id="P60422"/>
<dbReference type="BioCyc" id="EcoCyc:EG10865-MONOMER"/>
<dbReference type="BioCyc" id="MetaCyc:EG10865-MONOMER"/>
<dbReference type="EvolutionaryTrace" id="P60422"/>
<dbReference type="PRO" id="PR:P60422"/>
<dbReference type="Proteomes" id="UP000000625">
    <property type="component" value="Chromosome"/>
</dbReference>
<dbReference type="GO" id="GO:0005737">
    <property type="term" value="C:cytoplasm"/>
    <property type="evidence" value="ECO:0000314"/>
    <property type="project" value="ComplexPortal"/>
</dbReference>
<dbReference type="GO" id="GO:0005829">
    <property type="term" value="C:cytosol"/>
    <property type="evidence" value="ECO:0000314"/>
    <property type="project" value="EcoCyc"/>
</dbReference>
<dbReference type="GO" id="GO:0022625">
    <property type="term" value="C:cytosolic large ribosomal subunit"/>
    <property type="evidence" value="ECO:0000314"/>
    <property type="project" value="CAFA"/>
</dbReference>
<dbReference type="GO" id="GO:1990082">
    <property type="term" value="C:DnaA-L2 complex"/>
    <property type="evidence" value="ECO:0000353"/>
    <property type="project" value="ComplexPortal"/>
</dbReference>
<dbReference type="GO" id="GO:0003723">
    <property type="term" value="F:RNA binding"/>
    <property type="evidence" value="ECO:0000318"/>
    <property type="project" value="GO_Central"/>
</dbReference>
<dbReference type="GO" id="GO:0019843">
    <property type="term" value="F:rRNA binding"/>
    <property type="evidence" value="ECO:0007669"/>
    <property type="project" value="UniProtKB-UniRule"/>
</dbReference>
<dbReference type="GO" id="GO:0003735">
    <property type="term" value="F:structural constituent of ribosome"/>
    <property type="evidence" value="ECO:0000314"/>
    <property type="project" value="CAFA"/>
</dbReference>
<dbReference type="GO" id="GO:0016740">
    <property type="term" value="F:transferase activity"/>
    <property type="evidence" value="ECO:0007669"/>
    <property type="project" value="InterPro"/>
</dbReference>
<dbReference type="GO" id="GO:0008270">
    <property type="term" value="F:zinc ion binding"/>
    <property type="evidence" value="ECO:0000314"/>
    <property type="project" value="EcoliWiki"/>
</dbReference>
<dbReference type="GO" id="GO:0002181">
    <property type="term" value="P:cytoplasmic translation"/>
    <property type="evidence" value="ECO:0000318"/>
    <property type="project" value="GO_Central"/>
</dbReference>
<dbReference type="GO" id="GO:0032297">
    <property type="term" value="P:negative regulation of DNA-templated DNA replication initiation"/>
    <property type="evidence" value="ECO:0000314"/>
    <property type="project" value="ComplexPortal"/>
</dbReference>
<dbReference type="GO" id="GO:0000027">
    <property type="term" value="P:ribosomal large subunit assembly"/>
    <property type="evidence" value="ECO:0000314"/>
    <property type="project" value="CAFA"/>
</dbReference>
<dbReference type="FunFam" id="2.30.30.30:FF:000001">
    <property type="entry name" value="50S ribosomal protein L2"/>
    <property type="match status" value="1"/>
</dbReference>
<dbReference type="FunFam" id="2.40.50.140:FF:000003">
    <property type="entry name" value="50S ribosomal protein L2"/>
    <property type="match status" value="1"/>
</dbReference>
<dbReference type="FunFam" id="4.10.950.10:FF:000001">
    <property type="entry name" value="50S ribosomal protein L2"/>
    <property type="match status" value="1"/>
</dbReference>
<dbReference type="Gene3D" id="2.30.30.30">
    <property type="match status" value="1"/>
</dbReference>
<dbReference type="Gene3D" id="2.40.50.140">
    <property type="entry name" value="Nucleic acid-binding proteins"/>
    <property type="match status" value="1"/>
</dbReference>
<dbReference type="Gene3D" id="4.10.950.10">
    <property type="entry name" value="Ribosomal protein L2, domain 3"/>
    <property type="match status" value="1"/>
</dbReference>
<dbReference type="HAMAP" id="MF_01320_B">
    <property type="entry name" value="Ribosomal_uL2_B"/>
    <property type="match status" value="1"/>
</dbReference>
<dbReference type="InterPro" id="IPR012340">
    <property type="entry name" value="NA-bd_OB-fold"/>
</dbReference>
<dbReference type="InterPro" id="IPR014722">
    <property type="entry name" value="Rib_uL2_dom2"/>
</dbReference>
<dbReference type="InterPro" id="IPR002171">
    <property type="entry name" value="Ribosomal_uL2"/>
</dbReference>
<dbReference type="InterPro" id="IPR005880">
    <property type="entry name" value="Ribosomal_uL2_bac/org-type"/>
</dbReference>
<dbReference type="InterPro" id="IPR022669">
    <property type="entry name" value="Ribosomal_uL2_C"/>
</dbReference>
<dbReference type="InterPro" id="IPR022671">
    <property type="entry name" value="Ribosomal_uL2_CS"/>
</dbReference>
<dbReference type="InterPro" id="IPR014726">
    <property type="entry name" value="Ribosomal_uL2_dom3"/>
</dbReference>
<dbReference type="InterPro" id="IPR022666">
    <property type="entry name" value="Ribosomal_uL2_RNA-bd_dom"/>
</dbReference>
<dbReference type="InterPro" id="IPR008991">
    <property type="entry name" value="Translation_prot_SH3-like_sf"/>
</dbReference>
<dbReference type="NCBIfam" id="TIGR01171">
    <property type="entry name" value="rplB_bact"/>
    <property type="match status" value="1"/>
</dbReference>
<dbReference type="PANTHER" id="PTHR13691:SF5">
    <property type="entry name" value="LARGE RIBOSOMAL SUBUNIT PROTEIN UL2M"/>
    <property type="match status" value="1"/>
</dbReference>
<dbReference type="PANTHER" id="PTHR13691">
    <property type="entry name" value="RIBOSOMAL PROTEIN L2"/>
    <property type="match status" value="1"/>
</dbReference>
<dbReference type="Pfam" id="PF00181">
    <property type="entry name" value="Ribosomal_L2"/>
    <property type="match status" value="1"/>
</dbReference>
<dbReference type="Pfam" id="PF03947">
    <property type="entry name" value="Ribosomal_L2_C"/>
    <property type="match status" value="1"/>
</dbReference>
<dbReference type="PIRSF" id="PIRSF002158">
    <property type="entry name" value="Ribosomal_L2"/>
    <property type="match status" value="1"/>
</dbReference>
<dbReference type="SMART" id="SM01383">
    <property type="entry name" value="Ribosomal_L2"/>
    <property type="match status" value="1"/>
</dbReference>
<dbReference type="SMART" id="SM01382">
    <property type="entry name" value="Ribosomal_L2_C"/>
    <property type="match status" value="1"/>
</dbReference>
<dbReference type="SUPFAM" id="SSF50249">
    <property type="entry name" value="Nucleic acid-binding proteins"/>
    <property type="match status" value="1"/>
</dbReference>
<dbReference type="SUPFAM" id="SSF50104">
    <property type="entry name" value="Translation proteins SH3-like domain"/>
    <property type="match status" value="1"/>
</dbReference>
<dbReference type="PROSITE" id="PS00467">
    <property type="entry name" value="RIBOSOMAL_L2"/>
    <property type="match status" value="1"/>
</dbReference>
<name>RL2_ECOLI</name>
<protein>
    <recommendedName>
        <fullName evidence="21">Large ribosomal subunit protein uL2</fullName>
    </recommendedName>
    <alternativeName>
        <fullName>50S ribosomal protein L2</fullName>
    </alternativeName>
</protein>
<proteinExistence type="evidence at protein level"/>
<comment type="function">
    <text evidence="3 4 5 6 7 15 17">One of the primary rRNA binding proteins (PubMed:3298242). Located near the base of the L1 stalk, it is probably also mobile. Required for association of the 30S and 50S subunits to form the 70S ribosome, for tRNA binding and peptide bond formation (PubMed:8722025). It has been suggested to have peptidyltransferase activity; this is highly controversial.</text>
</comment>
<comment type="function">
    <text evidence="6">In the E.coli 70S ribosome in the initiation state it has been modeled to make several contacts with the 16S rRNA (forming bridge B7b, PubMed:12809609); these contacts are broken in the model with bound EF-G.</text>
</comment>
<comment type="subunit">
    <text evidence="2 3 5 6 7 9 10 11 12 13 14 16 18 20">Part of the 50S ribosomal subunit (PubMed:10094780, PubMed:10756104, PubMed:11114255, PubMed:12809609, PubMed:16272117, PubMed:24844575, PubMed:25310980, PubMed:27906160, PubMed:27906161, PubMed:27934701, PubMed:7556101, Ref.4). Forms a bridge to the 30S subunit in the 70S ribosome, contacting the 16S rRNA (PubMed:12809609). Interacts weakly with S6 in one of the 3.5 A resolved structures (PubMed:9298644). In pull-down experiments interacts with CedA (PubMed:28818726).</text>
</comment>
<comment type="interaction">
    <interactant intactId="EBI-543515">
        <id>P60422</id>
    </interactant>
    <interactant intactId="EBI-548951">
        <id>P03004</id>
        <label>dnaA</label>
    </interactant>
    <organismsDiffer>false</organismsDiffer>
    <experiments>5</experiments>
</comment>
<comment type="interaction">
    <interactant intactId="EBI-543515">
        <id>P60422</id>
    </interactant>
    <interactant intactId="EBI-1132437">
        <id>P45759</id>
        <label>gspE</label>
    </interactant>
    <organismsDiffer>false</organismsDiffer>
    <experiments>2</experiments>
</comment>
<comment type="interaction">
    <interactant intactId="EBI-543515">
        <id>P60422</id>
    </interactant>
    <interactant intactId="EBI-909268">
        <id>P00959</id>
        <label>metG</label>
    </interactant>
    <organismsDiffer>false</organismsDiffer>
    <experiments>2</experiments>
</comment>
<comment type="interaction">
    <interactant intactId="EBI-543515">
        <id>P60422</id>
    </interactant>
    <interactant intactId="EBI-544985">
        <id>P0A7Z4</id>
        <label>rpoA</label>
    </interactant>
    <organismsDiffer>false</organismsDiffer>
    <experiments>6</experiments>
</comment>
<comment type="mass spectrometry"/>
<comment type="miscellaneous">
    <text evidence="19">This protein can be partially replaced in vivo by its H.marismortui (HmaL2) or human (L8, from the 60S cytoplasmic ribosome) homolog.</text>
</comment>
<comment type="similarity">
    <text evidence="22">Belongs to the universal ribosomal protein uL2 family.</text>
</comment>
<evidence type="ECO:0000256" key="1">
    <source>
        <dbReference type="SAM" id="MobiDB-lite"/>
    </source>
</evidence>
<evidence type="ECO:0000269" key="2">
    <source>
    </source>
</evidence>
<evidence type="ECO:0000269" key="3">
    <source>
    </source>
</evidence>
<evidence type="ECO:0000269" key="4">
    <source>
    </source>
</evidence>
<evidence type="ECO:0000269" key="5">
    <source>
    </source>
</evidence>
<evidence type="ECO:0000269" key="6">
    <source>
    </source>
</evidence>
<evidence type="ECO:0000269" key="7">
    <source>
    </source>
</evidence>
<evidence type="ECO:0000269" key="8">
    <source>
    </source>
</evidence>
<evidence type="ECO:0000269" key="9">
    <source>
    </source>
</evidence>
<evidence type="ECO:0000269" key="10">
    <source>
    </source>
</evidence>
<evidence type="ECO:0000269" key="11">
    <source>
    </source>
</evidence>
<evidence type="ECO:0000269" key="12">
    <source>
    </source>
</evidence>
<evidence type="ECO:0000269" key="13">
    <source>
    </source>
</evidence>
<evidence type="ECO:0000269" key="14">
    <source>
    </source>
</evidence>
<evidence type="ECO:0000269" key="15">
    <source>
    </source>
</evidence>
<evidence type="ECO:0000269" key="16">
    <source>
    </source>
</evidence>
<evidence type="ECO:0000269" key="17">
    <source>
    </source>
</evidence>
<evidence type="ECO:0000269" key="18">
    <source>
    </source>
</evidence>
<evidence type="ECO:0000269" key="19">
    <source>
    </source>
</evidence>
<evidence type="ECO:0000269" key="20">
    <source ref="4"/>
</evidence>
<evidence type="ECO:0000303" key="21">
    <source>
    </source>
</evidence>
<evidence type="ECO:0000305" key="22"/>
<evidence type="ECO:0007829" key="23">
    <source>
        <dbReference type="PDB" id="6PCQ"/>
    </source>
</evidence>
<evidence type="ECO:0007829" key="24">
    <source>
        <dbReference type="PDB" id="6PCS"/>
    </source>
</evidence>
<evidence type="ECO:0007829" key="25">
    <source>
        <dbReference type="PDB" id="6XZ7"/>
    </source>
</evidence>
<evidence type="ECO:0007829" key="26">
    <source>
        <dbReference type="PDB" id="6YS3"/>
    </source>
</evidence>
<evidence type="ECO:0007829" key="27">
    <source>
        <dbReference type="PDB" id="7BL4"/>
    </source>
</evidence>
<evidence type="ECO:0007829" key="28">
    <source>
        <dbReference type="PDB" id="7BV8"/>
    </source>
</evidence>
<evidence type="ECO:0007829" key="29">
    <source>
        <dbReference type="PDB" id="7ZOD"/>
    </source>
</evidence>
<evidence type="ECO:0007829" key="30">
    <source>
        <dbReference type="PDB" id="7ZQ6"/>
    </source>
</evidence>
<evidence type="ECO:0007829" key="31">
    <source>
        <dbReference type="PDB" id="8C8Y"/>
    </source>
</evidence>
<evidence type="ECO:0007829" key="32">
    <source>
        <dbReference type="PDB" id="8CGK"/>
    </source>
</evidence>
<evidence type="ECO:0007829" key="33">
    <source>
        <dbReference type="PDB" id="8RPY"/>
    </source>
</evidence>
<sequence>MAVVKCKPTSPGRRHVVKVVNPELHKGKPFAPLLEKNSKSGGRNNNGRITTRHIGGGHKQAYRIVDFKRNKDGIPAVVERLEYDPNRSANIALVLYKDGERRYILAPKGLKAGDQIQSGVDAAIKPGNTLPMRNIPVGSTVHNVEMKPGKGGQLARSAGTYVQIVARDGAYVTLRLRSGEMRKVEADCRATLGEVGNAEHMLRVLGKAGAARWRGVRPTVRGTAMNPVDHPHGGGEGRNFGKHPVTPWGVQTKGKKTRSNKRTDKFIVRRRSK</sequence>
<accession>P60422</accession>
<accession>P02387</accession>
<accession>Q2M6Y2</accession>
<gene>
    <name type="primary">rplB</name>
    <name type="ordered locus">b3317</name>
    <name type="ordered locus">JW3279</name>
</gene>
<reference key="1">
    <citation type="journal article" date="1985" name="Nucleic Acids Res.">
        <title>Structure of the Escherichia coli S10 ribosomal protein operon.</title>
        <authorList>
            <person name="Zurawski G."/>
            <person name="Zurawski S.M."/>
        </authorList>
    </citation>
    <scope>NUCLEOTIDE SEQUENCE [GENOMIC DNA]</scope>
</reference>
<reference key="2">
    <citation type="journal article" date="1997" name="Science">
        <title>The complete genome sequence of Escherichia coli K-12.</title>
        <authorList>
            <person name="Blattner F.R."/>
            <person name="Plunkett G. III"/>
            <person name="Bloch C.A."/>
            <person name="Perna N.T."/>
            <person name="Burland V."/>
            <person name="Riley M."/>
            <person name="Collado-Vides J."/>
            <person name="Glasner J.D."/>
            <person name="Rode C.K."/>
            <person name="Mayhew G.F."/>
            <person name="Gregor J."/>
            <person name="Davis N.W."/>
            <person name="Kirkpatrick H.A."/>
            <person name="Goeden M.A."/>
            <person name="Rose D.J."/>
            <person name="Mau B."/>
            <person name="Shao Y."/>
        </authorList>
    </citation>
    <scope>NUCLEOTIDE SEQUENCE [LARGE SCALE GENOMIC DNA]</scope>
    <source>
        <strain>K12 / MG1655 / ATCC 47076</strain>
    </source>
</reference>
<reference key="3">
    <citation type="journal article" date="2006" name="Mol. Syst. Biol.">
        <title>Highly accurate genome sequences of Escherichia coli K-12 strains MG1655 and W3110.</title>
        <authorList>
            <person name="Hayashi K."/>
            <person name="Morooka N."/>
            <person name="Yamamoto Y."/>
            <person name="Fujita K."/>
            <person name="Isono K."/>
            <person name="Choi S."/>
            <person name="Ohtsubo E."/>
            <person name="Baba T."/>
            <person name="Wanner B.L."/>
            <person name="Mori H."/>
            <person name="Horiuchi T."/>
        </authorList>
    </citation>
    <scope>NUCLEOTIDE SEQUENCE [LARGE SCALE GENOMIC DNA]</scope>
    <source>
        <strain>K12 / W3110 / ATCC 27325 / DSM 5911</strain>
    </source>
</reference>
<reference key="4">
    <citation type="journal article" date="1982" name="FEBS Lett.">
        <title>The primary structure of protein L2 from the Escherichia coli ribosome.</title>
        <authorList>
            <person name="Kimura M."/>
            <person name="Mende L."/>
            <person name="Wittmann-Liebold B."/>
        </authorList>
    </citation>
    <scope>PROTEIN SEQUENCE OF 2-273</scope>
    <scope>SUBUNIT</scope>
</reference>
<reference key="5">
    <citation type="journal article" date="1995" name="EMBO J.">
        <title>Protein-rRNA binding features and their structural and functional implications in ribosomes as determined by cross-linking studies.</title>
        <authorList>
            <person name="Urlaub H."/>
            <person name="Kruft V."/>
            <person name="Bischof O."/>
            <person name="Mueller E.-C."/>
            <person name="Wittmann-Liebold B."/>
        </authorList>
    </citation>
    <scope>PROTEIN SEQUENCE OF 60-71 AND 200-208</scope>
    <scope>SUBUNIT</scope>
    <scope>CROSS-LINKING TO RRNA</scope>
    <source>
        <strain>MRE-600</strain>
    </source>
</reference>
<reference key="6">
    <citation type="journal article" date="1987" name="J. Biol. Chem.">
        <title>Incorporation of six additional proteins to complete the assembly map of the 50 S subunit from Escherichia coli ribosomes.</title>
        <authorList>
            <person name="Herold M."/>
            <person name="Nierhaus K.H."/>
        </authorList>
    </citation>
    <scope>ASSEMBLY MAP OF THE 50S SUBUNIT</scope>
    <source>
        <strain>K12</strain>
    </source>
</reference>
<reference key="7">
    <citation type="journal article" date="1995" name="Biochem. Cell Biol.">
        <title>Histidine 229 in protein L2 is apparently essential for 50S peptidyl transferase activity.</title>
        <authorList>
            <person name="Cooperman B.S."/>
            <person name="Wooten T."/>
            <person name="Romero D.P."/>
            <person name="Traut R.R."/>
        </authorList>
    </citation>
    <scope>MUTAGENESIS OF HIS-230</scope>
</reference>
<reference key="8">
    <citation type="journal article" date="1997" name="Electrophoresis">
        <title>Escherichia coli proteome analysis using the gene-protein database.</title>
        <authorList>
            <person name="VanBogelen R.A."/>
            <person name="Abshire K.Z."/>
            <person name="Moldover B."/>
            <person name="Olson E.R."/>
            <person name="Neidhardt F.C."/>
        </authorList>
    </citation>
    <scope>IDENTIFICATION BY 2D-GEL</scope>
</reference>
<reference key="9">
    <citation type="journal article" date="1998" name="Biochem. J.">
        <title>Functional implications of ribosomal protein L2 in protein biosynthesis as shown by in vivo replacement studies.</title>
        <authorList>
            <person name="Uehlein M."/>
            <person name="Wegloehner W."/>
            <person name="Urlaub H."/>
            <person name="Wittmann-Liebold B."/>
        </authorList>
    </citation>
    <scope>PROTEIN REPLACEMENT STUDIES</scope>
</reference>
<reference key="10">
    <citation type="journal article" date="2000" name="EMBO J.">
        <title>Ribosomal protein L2 is involved in the association of the ribosomal subunits, tRNA binding to A and P sites and peptidyl transfer.</title>
        <authorList>
            <person name="Diedrich G."/>
            <person name="Spahn C.M.T."/>
            <person name="Stelzl U."/>
            <person name="Schaefer M.A."/>
            <person name="Wooten T."/>
            <person name="Bochkariov D.E."/>
            <person name="Cooperman B.S."/>
            <person name="Traut R.R."/>
            <person name="Nierhaus K.H."/>
        </authorList>
    </citation>
    <scope>REQUIREMENT FOR 70S RIBOSOME FORMATION</scope>
    <scope>TRNA-BINDING</scope>
    <scope>MUTAGENESIS OF CONSERVED RESIDUES</scope>
</reference>
<reference key="11">
    <citation type="journal article" date="2001" name="J. Mol. Biol.">
        <title>Localization of the protein L2 in the 50 S subunit and the 70 S E. coli ribosome.</title>
        <authorList>
            <person name="Willumeit R."/>
            <person name="Forthmann S."/>
            <person name="Beckmann J."/>
            <person name="Diedrich G."/>
            <person name="Ratering R."/>
            <person name="Stuhrmann H.B."/>
            <person name="Nierhaus K.H."/>
        </authorList>
    </citation>
    <scope>POSITION IN THE 50S SUBUNIT AND 70S RIBOSOME</scope>
    <scope>SUBUNIT</scope>
    <source>
        <strain>MRE-600</strain>
    </source>
</reference>
<reference key="12">
    <citation type="journal article" date="1999" name="Anal. Biochem.">
        <title>Observation of Escherichia coli ribosomal proteins and their posttranslational modifications by mass spectrometry.</title>
        <authorList>
            <person name="Arnold R.J."/>
            <person name="Reilly J.P."/>
        </authorList>
    </citation>
    <scope>MASS SPECTROMETRY</scope>
    <scope>SUBUNIT</scope>
    <source>
        <strain>K12 / ATCC 25404 / DSM 5698 / NCIMB 11290</strain>
    </source>
</reference>
<reference key="13">
    <citation type="journal article" date="2009" name="Mol. Cell. Proteomics">
        <title>Lysine acetylation is a highly abundant and evolutionarily conserved modification in Escherichia coli.</title>
        <authorList>
            <person name="Zhang J."/>
            <person name="Sprung R."/>
            <person name="Pei J."/>
            <person name="Tan X."/>
            <person name="Kim S."/>
            <person name="Zhu H."/>
            <person name="Liu C.F."/>
            <person name="Grishin N.V."/>
            <person name="Zhao Y."/>
        </authorList>
    </citation>
    <scope>ACETYLATION [LARGE SCALE ANALYSIS] AT LYS-242</scope>
    <scope>IDENTIFICATION BY MASS SPECTROMETRY</scope>
    <source>
        <strain>K12 / JW1106</strain>
        <strain>K12 / MG1655 / ATCC 47076</strain>
    </source>
</reference>
<reference key="14">
    <citation type="journal article" date="2014" name="Curr. Opin. Struct. Biol.">
        <title>A new system for naming ribosomal proteins.</title>
        <authorList>
            <person name="Ban N."/>
            <person name="Beckmann R."/>
            <person name="Cate J.H.D."/>
            <person name="Dinman J.D."/>
            <person name="Dragon F."/>
            <person name="Ellis S.R."/>
            <person name="Lafontaine D.L.J."/>
            <person name="Lindahl L."/>
            <person name="Liljas A."/>
            <person name="Lipton J.M."/>
            <person name="McAlear M.A."/>
            <person name="Moore P.B."/>
            <person name="Noller H.F."/>
            <person name="Ortega J."/>
            <person name="Panse V.G."/>
            <person name="Ramakrishnan V."/>
            <person name="Spahn C.M.T."/>
            <person name="Steitz T.A."/>
            <person name="Tchorzewski M."/>
            <person name="Tollervey D."/>
            <person name="Warren A.J."/>
            <person name="Williamson J.R."/>
            <person name="Wilson D."/>
            <person name="Yonath A."/>
            <person name="Yusupov M."/>
        </authorList>
    </citation>
    <scope>NOMENCLATURE</scope>
</reference>
<reference key="15">
    <citation type="journal article" date="2018" name="Int. J. Biol. Macromol.">
        <title>Identification of functional interactome of a key cell division regulatory protein CedA of E.coli.</title>
        <authorList>
            <person name="Sharma P."/>
            <person name="Tomar A.K."/>
            <person name="Kundu B."/>
        </authorList>
    </citation>
    <scope>INTERACTION WITH CEDA</scope>
</reference>
<reference key="16">
    <citation type="journal article" date="2000" name="J. Mol. Biol.">
        <title>The 3D arrangement of the 23 S and 5 S rRNA in the Escherichia coli 50 S ribosomal subunit based on a cryo-electron microscopic reconstruction at 7.5 A resolution.</title>
        <authorList>
            <person name="Mueller F."/>
            <person name="Sommer I."/>
            <person name="Baranov P."/>
            <person name="Matadeen R."/>
            <person name="Stoldt M."/>
            <person name="Woehnert J."/>
            <person name="Goerlach M."/>
            <person name="van Heel M."/>
            <person name="Brimacombe R."/>
        </authorList>
    </citation>
    <scope>3D-STRUCTURE MODELING</scope>
    <scope>SUBUNIT</scope>
</reference>
<reference key="17">
    <citation type="journal article" date="2003" name="Cell">
        <title>Study of the structural dynamics of the E. coli 70S ribosome using real-space refinement.</title>
        <authorList>
            <person name="Gao H."/>
            <person name="Sengupta J."/>
            <person name="Valle M."/>
            <person name="Korostelev A."/>
            <person name="Eswar N."/>
            <person name="Stagg S.M."/>
            <person name="Van Roey P."/>
            <person name="Agrawal R.K."/>
            <person name="Harvey S.C."/>
            <person name="Sali A."/>
            <person name="Chapman M.S."/>
            <person name="Frank J."/>
        </authorList>
    </citation>
    <scope>STRUCTURE BY ELECTRON MICROSCOPY (11.50 ANGSTROMS)</scope>
    <scope>SUBUNIT</scope>
    <scope>INTERSUBUNIT BRIDGE FORMATION</scope>
    <source>
        <strain>MRE-600</strain>
    </source>
</reference>
<reference key="18">
    <citation type="journal article" date="2005" name="Science">
        <title>Structures of the bacterial ribosome at 3.5 A resolution.</title>
        <authorList>
            <person name="Schuwirth B.S."/>
            <person name="Borovinskaya M.A."/>
            <person name="Hau C.W."/>
            <person name="Zhang W."/>
            <person name="Vila-Sanjurjo A."/>
            <person name="Holton J.M."/>
            <person name="Cate J.H.D."/>
        </authorList>
    </citation>
    <scope>X-RAY CRYSTALLOGRAPHY (3.46 ANGSTROMS) OF 2 DIFFERENT RIBOSOME STRUCTURES</scope>
    <scope>SUBUNIT</scope>
    <source>
        <strain>MRE-600</strain>
    </source>
</reference>
<reference key="19">
    <citation type="journal article" date="2014" name="Cell Rep.">
        <title>Molecular basis for the ribosome functioning as an L-tryptophan sensor.</title>
        <authorList>
            <person name="Bischoff L."/>
            <person name="Berninghausen O."/>
            <person name="Beckmann R."/>
        </authorList>
    </citation>
    <scope>STRUCTURE BY ELECTRON MICROSCOPY (3.80 ANGSTROMS) OF 2-272 IN TNAC-STALLED 50S RIBOSOMAL SUBUNIT</scope>
    <scope>SUBUNIT</scope>
    <source>
        <strain>K12 / A19 / KC6</strain>
    </source>
</reference>
<reference key="20">
    <citation type="journal article" date="2014" name="PLoS Biol.">
        <title>Structural and functional insights into the mode of action of a universally conserved Obg GTPase.</title>
        <authorList>
            <person name="Feng B."/>
            <person name="Mandava C.S."/>
            <person name="Guo Q."/>
            <person name="Wang J."/>
            <person name="Cao W."/>
            <person name="Li N."/>
            <person name="Zhang Y."/>
            <person name="Zhang Y."/>
            <person name="Wang Z."/>
            <person name="Wu J."/>
            <person name="Sanyal S."/>
            <person name="Lei J."/>
            <person name="Gao N."/>
        </authorList>
    </citation>
    <scope>STRUCTURE BY ELECTRON MICROSCOPY (5.5 ANGSTROMS) OF 2-273 OF 50S RIBOSOMAL SUBUNIT IN COMPLEX WITH OBGE AND GMP-PNP</scope>
    <scope>SUBUNIT</scope>
</reference>
<reference key="21">
    <citation type="journal article" date="2017" name="Nature">
        <title>Mechanistic insights into the alternative translation termination by ArfA and RF2.</title>
        <authorList>
            <person name="Ma C."/>
            <person name="Kurita D."/>
            <person name="Li N."/>
            <person name="Chen Y."/>
            <person name="Himeno H."/>
            <person name="Gao N."/>
        </authorList>
    </citation>
    <scope>STRUCTURE BY ELECTRON MICROSCOPY (3.0 ANGSTROMS) OF 70S RIBOSOME IN COMPLEX WITH ARFA AND RF2</scope>
    <scope>SUBUNIT</scope>
</reference>
<reference key="22">
    <citation type="journal article" date="2017" name="Nature">
        <title>Structural basis for ArfA-RF2-mediated translation termination on mRNAs lacking stop codons.</title>
        <authorList>
            <person name="Huter P."/>
            <person name="Mueller C."/>
            <person name="Beckert B."/>
            <person name="Arenz S."/>
            <person name="Berninghausen O."/>
            <person name="Beckmann R."/>
            <person name="Wilson D.N."/>
        </authorList>
    </citation>
    <scope>STRUCTURE BY ELECTRON MICROSCOPY (3.1 ANGSTROMS) OF 70S RIBOSOME IN COMPLEX WITH ARFA AND RF2</scope>
    <scope>SUBUNIT</scope>
</reference>
<reference key="23">
    <citation type="journal article" date="2016" name="Science">
        <title>Translational termination without a stop codon.</title>
        <authorList>
            <person name="James N.R."/>
            <person name="Brown A."/>
            <person name="Gordiyenko Y."/>
            <person name="Ramakrishnan V."/>
        </authorList>
    </citation>
    <scope>STRUCTURE BY ELECTRON MICROSCOPY (2.97 ANGSTROMS) OF 70S RIBOSOME IN COMPLEX WITH ARFA AND RF2</scope>
    <scope>SUBUNIT</scope>
</reference>
<reference key="24">
    <citation type="journal article" date="2017" name="Nature">
        <title>Structural basis of co-translational quality control by ArfA and RF2 bound to ribosome.</title>
        <authorList>
            <person name="Zeng F."/>
            <person name="Chen Y."/>
            <person name="Remis J."/>
            <person name="Shekhar M."/>
            <person name="Phillips J.C."/>
            <person name="Tajkhorshid E."/>
            <person name="Jin H."/>
        </authorList>
    </citation>
    <scope>STRUCTURE BY ELECTRON MICROSCOPY (3.52 ANGSTROMS) OF 70S RIBOSOME IN COMPLEX WITH ARFA AND RF2</scope>
    <scope>SUBUNIT</scope>
</reference>
<feature type="initiator methionine" description="Removed" evidence="20">
    <location>
        <position position="1"/>
    </location>
</feature>
<feature type="chain" id="PRO_0000129559" description="Large ribosomal subunit protein uL2">
    <location>
        <begin position="2"/>
        <end position="273"/>
    </location>
</feature>
<feature type="region of interest" description="Disordered" evidence="1">
    <location>
        <begin position="28"/>
        <end position="53"/>
    </location>
</feature>
<feature type="region of interest" description="Disordered" evidence="1">
    <location>
        <begin position="221"/>
        <end position="273"/>
    </location>
</feature>
<feature type="compositionally biased region" description="Low complexity" evidence="1">
    <location>
        <begin position="39"/>
        <end position="48"/>
    </location>
</feature>
<feature type="modified residue" description="N6-acetyllysine" evidence="8">
    <location>
        <position position="242"/>
    </location>
</feature>
<feature type="mutagenesis site" description="Loss of peptidyltransferase activity in reconstituted ribosomes. No change in rRNA binding or assembly into ribosomes." evidence="17">
    <original>H</original>
    <variation>Q</variation>
    <location>
        <position position="230"/>
    </location>
</feature>
<feature type="sequence conflict" description="In Ref. 4; AA sequence." evidence="22" ref="4">
    <original>HGGG</original>
    <variation>GGGH</variation>
    <location>
        <begin position="232"/>
        <end position="235"/>
    </location>
</feature>
<feature type="strand" evidence="32">
    <location>
        <begin position="3"/>
        <end position="5"/>
    </location>
</feature>
<feature type="turn" evidence="32">
    <location>
        <begin position="11"/>
        <end position="15"/>
    </location>
</feature>
<feature type="strand" evidence="32">
    <location>
        <begin position="17"/>
        <end position="19"/>
    </location>
</feature>
<feature type="strand" evidence="31">
    <location>
        <begin position="22"/>
        <end position="24"/>
    </location>
</feature>
<feature type="helix" evidence="32">
    <location>
        <begin position="31"/>
        <end position="33"/>
    </location>
</feature>
<feature type="strand" evidence="32">
    <location>
        <begin position="34"/>
        <end position="36"/>
    </location>
</feature>
<feature type="strand" evidence="28">
    <location>
        <begin position="41"/>
        <end position="43"/>
    </location>
</feature>
<feature type="strand" evidence="32">
    <location>
        <begin position="49"/>
        <end position="54"/>
    </location>
</feature>
<feature type="strand" evidence="32">
    <location>
        <begin position="61"/>
        <end position="63"/>
    </location>
</feature>
<feature type="strand" evidence="32">
    <location>
        <begin position="76"/>
        <end position="82"/>
    </location>
</feature>
<feature type="strand" evidence="32">
    <location>
        <begin position="87"/>
        <end position="89"/>
    </location>
</feature>
<feature type="strand" evidence="32">
    <location>
        <begin position="91"/>
        <end position="96"/>
    </location>
</feature>
<feature type="turn" evidence="29">
    <location>
        <begin position="97"/>
        <end position="99"/>
    </location>
</feature>
<feature type="strand" evidence="32">
    <location>
        <begin position="101"/>
        <end position="105"/>
    </location>
</feature>
<feature type="strand" evidence="26">
    <location>
        <begin position="107"/>
        <end position="109"/>
    </location>
</feature>
<feature type="strand" evidence="27">
    <location>
        <begin position="115"/>
        <end position="121"/>
    </location>
</feature>
<feature type="strand" evidence="32">
    <location>
        <begin position="129"/>
        <end position="131"/>
    </location>
</feature>
<feature type="helix" evidence="32">
    <location>
        <begin position="132"/>
        <end position="134"/>
    </location>
</feature>
<feature type="strand" evidence="32">
    <location>
        <begin position="140"/>
        <end position="147"/>
    </location>
</feature>
<feature type="turn" evidence="25">
    <location>
        <begin position="148"/>
        <end position="150"/>
    </location>
</feature>
<feature type="strand" evidence="32">
    <location>
        <begin position="152"/>
        <end position="155"/>
    </location>
</feature>
<feature type="strand" evidence="23">
    <location>
        <begin position="157"/>
        <end position="159"/>
    </location>
</feature>
<feature type="strand" evidence="32">
    <location>
        <begin position="162"/>
        <end position="168"/>
    </location>
</feature>
<feature type="strand" evidence="32">
    <location>
        <begin position="171"/>
        <end position="175"/>
    </location>
</feature>
<feature type="strand" evidence="32">
    <location>
        <begin position="181"/>
        <end position="185"/>
    </location>
</feature>
<feature type="strand" evidence="32">
    <location>
        <begin position="188"/>
        <end position="193"/>
    </location>
</feature>
<feature type="helix" evidence="32">
    <location>
        <begin position="198"/>
        <end position="202"/>
    </location>
</feature>
<feature type="helix" evidence="32">
    <location>
        <begin position="208"/>
        <end position="213"/>
    </location>
</feature>
<feature type="helix" evidence="32">
    <location>
        <begin position="222"/>
        <end position="224"/>
    </location>
</feature>
<feature type="turn" evidence="32">
    <location>
        <begin position="227"/>
        <end position="229"/>
    </location>
</feature>
<feature type="strand" evidence="33">
    <location>
        <begin position="230"/>
        <end position="232"/>
    </location>
</feature>
<feature type="strand" evidence="32">
    <location>
        <begin position="236"/>
        <end position="238"/>
    </location>
</feature>
<feature type="turn" evidence="24">
    <location>
        <begin position="247"/>
        <end position="249"/>
    </location>
</feature>
<feature type="turn" evidence="30">
    <location>
        <begin position="252"/>
        <end position="254"/>
    </location>
</feature>
<feature type="turn" evidence="32">
    <location>
        <begin position="261"/>
        <end position="263"/>
    </location>
</feature>
<feature type="helix" evidence="32">
    <location>
        <begin position="264"/>
        <end position="266"/>
    </location>
</feature>
<feature type="strand" evidence="32">
    <location>
        <begin position="267"/>
        <end position="269"/>
    </location>
</feature>
<keyword id="KW-0002">3D-structure</keyword>
<keyword id="KW-0007">Acetylation</keyword>
<keyword id="KW-0903">Direct protein sequencing</keyword>
<keyword id="KW-1185">Reference proteome</keyword>
<keyword id="KW-0687">Ribonucleoprotein</keyword>
<keyword id="KW-0689">Ribosomal protein</keyword>
<keyword id="KW-0694">RNA-binding</keyword>
<keyword id="KW-0699">rRNA-binding</keyword>